<comment type="function">
    <text evidence="2 36 40 41 49">Muscle-specific type III intermediate filament essential for proper muscular structure and function. Plays a crucial role in maintaining the structure of sarcomeres, inter-connecting the Z-disks and forming the myofibrils, linking them not only to the sarcolemmal cytoskeleton, but also to the nucleus and mitochondria, thus providing strength for the muscle fiber during activity (PubMed:25358400). In adult striated muscle they form a fibrous network connecting myofibrils to each other and to the plasma membrane from the periphery of the Z-line structures (PubMed:24200904, PubMed:25394388, PubMed:26724190). May act as a sarcomeric microtubule-anchoring protein: specifically associates with detyrosinated tubulin-alpha chains, leading to buckled microtubules and mechanical resistance to contraction. Required for nuclear membrane integrity, via anchoring at the cell tip and nuclear envelope, resulting in maintenance of microtubule-derived intracellular mechanical forces (By similarity). Contributes to the transcriptional regulation of the NKX2-5 gene in cardiac progenitor cells during a short period of cardiomyogenesis and in cardiac side population stem cells in the adult. Plays a role in maintaining an optimal conformation of nebulette (NEB) on heart muscle sarcomeres to bind and recruit cardiac alpha-actin (By similarity).</text>
</comment>
<comment type="subunit">
    <text evidence="2 8 23 29 34 38 43 44">Homomer (PubMed:21135508). Interacts with DST (By similarity). Interacts with MTM1 (PubMed:21135508). Interacts with EPPK1; interaction is dependent of higher-order structure of intermediate filament (PubMed:16923132). Interacts with CRYAB (PubMed:28470624). Interacts with NEB (via nebulin repeats 160-164) (PubMed:23615443). Interacts (via rod region) with NEBL (via nebulin repeats 1-5) (PubMed:27733623). Interacts with ASB2 isoform 1; the interaction targets DES for proteasomal degradation (By similarity). Interacts with PLEC isoform 1C (PubMed:24940650). Interacts with PKP1 (PubMed:10852826). Interacts with FLII (By similarity).</text>
</comment>
<comment type="interaction">
    <interactant intactId="EBI-1055572">
        <id>P17661</id>
    </interactant>
    <interactant intactId="EBI-356517">
        <id>Q9UL15</id>
        <label>BAG5</label>
    </interactant>
    <organismsDiffer>false</organismsDiffer>
    <experiments>3</experiments>
</comment>
<comment type="interaction">
    <interactant intactId="EBI-1055572">
        <id>P17661</id>
    </interactant>
    <interactant intactId="EBI-747505">
        <id>Q8TAB5</id>
        <label>C1orf216</label>
    </interactant>
    <organismsDiffer>false</organismsDiffer>
    <experiments>3</experiments>
</comment>
<comment type="interaction">
    <interactant intactId="EBI-1055572">
        <id>P17661</id>
    </interactant>
    <interactant intactId="EBI-6873363">
        <id>Q8WUE5</id>
        <label>CT55</label>
    </interactant>
    <organismsDiffer>false</organismsDiffer>
    <experiments>6</experiments>
</comment>
<comment type="interaction">
    <interactant intactId="EBI-1055572">
        <id>P17661</id>
    </interactant>
    <interactant intactId="EBI-5453285">
        <id>Q2TBE0</id>
        <label>CWF19L2</label>
    </interactant>
    <organismsDiffer>false</organismsDiffer>
    <experiments>3</experiments>
</comment>
<comment type="interaction">
    <interactant intactId="EBI-1055572">
        <id>P17661</id>
    </interactant>
    <interactant intactId="EBI-351257">
        <id>P26196</id>
        <label>DDX6</label>
    </interactant>
    <organismsDiffer>false</organismsDiffer>
    <experiments>3</experiments>
</comment>
<comment type="interaction">
    <interactant intactId="EBI-1055572">
        <id>P17661</id>
    </interactant>
    <interactant intactId="EBI-1055572">
        <id>P17661</id>
        <label>DES</label>
    </interactant>
    <organismsDiffer>false</organismsDiffer>
    <experiments>7</experiments>
</comment>
<comment type="interaction">
    <interactant intactId="EBI-1055572">
        <id>P17661</id>
    </interactant>
    <interactant intactId="EBI-11599346">
        <id>O43812</id>
        <label>DUX1</label>
    </interactant>
    <organismsDiffer>false</organismsDiffer>
    <experiments>4</experiments>
</comment>
<comment type="interaction">
    <interactant intactId="EBI-1055572">
        <id>P17661</id>
    </interactant>
    <interactant intactId="EBI-11600078">
        <id>Q9UBX2</id>
        <label>DUX4</label>
    </interactant>
    <organismsDiffer>false</organismsDiffer>
    <experiments>3</experiments>
</comment>
<comment type="interaction">
    <interactant intactId="EBI-1055572">
        <id>P17661</id>
    </interactant>
    <interactant intactId="EBI-2339219">
        <id>Q08426</id>
        <label>EHHADH</label>
    </interactant>
    <organismsDiffer>false</organismsDiffer>
    <experiments>6</experiments>
</comment>
<comment type="interaction">
    <interactant intactId="EBI-1055572">
        <id>P17661</id>
    </interactant>
    <interactant intactId="EBI-744302">
        <id>P14136</id>
        <label>GFAP</label>
    </interactant>
    <organismsDiffer>false</organismsDiffer>
    <experiments>8</experiments>
</comment>
<comment type="interaction">
    <interactant intactId="EBI-1055572">
        <id>P17661</id>
    </interactant>
    <interactant intactId="EBI-5916454">
        <id>A6NEM1</id>
        <label>GOLGA6L9</label>
    </interactant>
    <organismsDiffer>false</organismsDiffer>
    <experiments>3</experiments>
</comment>
<comment type="interaction">
    <interactant intactId="EBI-1055572">
        <id>P17661</id>
    </interactant>
    <interactant intactId="EBI-466029">
        <id>P42858</id>
        <label>HTT</label>
    </interactant>
    <organismsDiffer>false</organismsDiffer>
    <experiments>9</experiments>
</comment>
<comment type="interaction">
    <interactant intactId="EBI-1055572">
        <id>P17661</id>
    </interactant>
    <interactant intactId="EBI-1055254">
        <id>Q8WXH2</id>
        <label>JPH3</label>
    </interactant>
    <organismsDiffer>false</organismsDiffer>
    <experiments>3</experiments>
</comment>
<comment type="interaction">
    <interactant intactId="EBI-1055572">
        <id>P17661</id>
    </interactant>
    <interactant intactId="EBI-1223876">
        <id>P13646</id>
        <label>KRT13</label>
    </interactant>
    <organismsDiffer>false</organismsDiffer>
    <experiments>3</experiments>
</comment>
<comment type="interaction">
    <interactant intactId="EBI-1055572">
        <id>P17661</id>
    </interactant>
    <interactant intactId="EBI-739566">
        <id>P19012</id>
        <label>KRT15</label>
    </interactant>
    <organismsDiffer>false</organismsDiffer>
    <experiments>3</experiments>
</comment>
<comment type="interaction">
    <interactant intactId="EBI-1055572">
        <id>P17661</id>
    </interactant>
    <interactant intactId="EBI-742094">
        <id>P35900</id>
        <label>KRT20</label>
    </interactant>
    <organismsDiffer>false</organismsDiffer>
    <experiments>3</experiments>
</comment>
<comment type="interaction">
    <interactant intactId="EBI-1055572">
        <id>P17661</id>
    </interactant>
    <interactant intactId="EBI-1049638">
        <id>Q14525</id>
        <label>KRT33B</label>
    </interactant>
    <organismsDiffer>false</organismsDiffer>
    <experiments>3</experiments>
</comment>
<comment type="interaction">
    <interactant intactId="EBI-1055572">
        <id>P17661</id>
    </interactant>
    <interactant intactId="EBI-1045716">
        <id>O76014</id>
        <label>KRT37</label>
    </interactant>
    <organismsDiffer>false</organismsDiffer>
    <experiments>3</experiments>
</comment>
<comment type="interaction">
    <interactant intactId="EBI-1055572">
        <id>P17661</id>
    </interactant>
    <interactant intactId="EBI-2949715">
        <id>O95678</id>
        <label>KRT75</label>
    </interactant>
    <organismsDiffer>false</organismsDiffer>
    <experiments>3</experiments>
</comment>
<comment type="interaction">
    <interactant intactId="EBI-1055572">
        <id>P17661</id>
    </interactant>
    <interactant intactId="EBI-20141748">
        <id>P52954</id>
        <label>LBX1</label>
    </interactant>
    <organismsDiffer>false</organismsDiffer>
    <experiments>3</experiments>
</comment>
<comment type="interaction">
    <interactant intactId="EBI-1055572">
        <id>P17661</id>
    </interactant>
    <interactant intactId="EBI-726510">
        <id>Q96BZ8</id>
        <label>LENG1</label>
    </interactant>
    <organismsDiffer>false</organismsDiffer>
    <experiments>3</experiments>
</comment>
<comment type="interaction">
    <interactant intactId="EBI-1055572">
        <id>P17661</id>
    </interactant>
    <interactant intactId="EBI-2798728">
        <id>P61968</id>
        <label>LMO4</label>
    </interactant>
    <organismsDiffer>false</organismsDiffer>
    <experiments>3</experiments>
</comment>
<comment type="interaction">
    <interactant intactId="EBI-1055572">
        <id>P17661</id>
    </interactant>
    <interactant intactId="EBI-2690768">
        <id>Q496Y0</id>
        <label>LONRF3</label>
    </interactant>
    <organismsDiffer>false</organismsDiffer>
    <experiments>3</experiments>
</comment>
<comment type="interaction">
    <interactant intactId="EBI-1055572">
        <id>P17661</id>
    </interactant>
    <interactant intactId="EBI-748182">
        <id>Q8TC57</id>
        <label>M1AP</label>
    </interactant>
    <organismsDiffer>false</organismsDiffer>
    <experiments>3</experiments>
</comment>
<comment type="interaction">
    <interactant intactId="EBI-1055572">
        <id>P17661</id>
    </interactant>
    <interactant intactId="EBI-744248">
        <id>P40692</id>
        <label>MLH1</label>
    </interactant>
    <organismsDiffer>false</organismsDiffer>
    <experiments>6</experiments>
</comment>
<comment type="interaction">
    <interactant intactId="EBI-1055572">
        <id>P17661</id>
    </interactant>
    <interactant intactId="EBI-2864109">
        <id>Q13496</id>
        <label>MTM1</label>
    </interactant>
    <organismsDiffer>false</organismsDiffer>
    <experiments>13</experiments>
</comment>
<comment type="interaction">
    <interactant intactId="EBI-1055572">
        <id>P17661</id>
    </interactant>
    <interactant intactId="EBI-475646">
        <id>P07196</id>
        <label>NEFL</label>
    </interactant>
    <organismsDiffer>false</organismsDiffer>
    <experiments>8</experiments>
</comment>
<comment type="interaction">
    <interactant intactId="EBI-1055572">
        <id>P17661</id>
    </interactant>
    <interactant intactId="EBI-11750983">
        <id>Q9HC98-4</id>
        <label>NEK6</label>
    </interactant>
    <organismsDiffer>false</organismsDiffer>
    <experiments>3</experiments>
</comment>
<comment type="interaction">
    <interactant intactId="EBI-1055572">
        <id>P17661</id>
    </interactant>
    <interactant intactId="EBI-348567">
        <id>O75928-2</id>
        <label>PIAS2</label>
    </interactant>
    <organismsDiffer>false</organismsDiffer>
    <experiments>3</experiments>
</comment>
<comment type="interaction">
    <interactant intactId="EBI-1055572">
        <id>P17661</id>
    </interactant>
    <interactant intactId="EBI-10232538">
        <id>Q8WWB5</id>
        <label>PIH1D2</label>
    </interactant>
    <organismsDiffer>false</organismsDiffer>
    <experiments>3</experiments>
</comment>
<comment type="interaction">
    <interactant intactId="EBI-1055572">
        <id>P17661</id>
    </interactant>
    <interactant intactId="EBI-347928">
        <id>P62487</id>
        <label>POLR2G</label>
    </interactant>
    <organismsDiffer>false</organismsDiffer>
    <experiments>3</experiments>
</comment>
<comment type="interaction">
    <interactant intactId="EBI-1055572">
        <id>P17661</id>
    </interactant>
    <interactant intactId="EBI-368321">
        <id>O60437</id>
        <label>PPL</label>
    </interactant>
    <organismsDiffer>false</organismsDiffer>
    <experiments>3</experiments>
</comment>
<comment type="interaction">
    <interactant intactId="EBI-1055572">
        <id>P17661</id>
    </interactant>
    <interactant intactId="EBI-2557469">
        <id>Q6NYC8</id>
        <label>PPP1R18</label>
    </interactant>
    <organismsDiffer>false</organismsDiffer>
    <experiments>6</experiments>
</comment>
<comment type="interaction">
    <interactant intactId="EBI-1055572">
        <id>P17661</id>
    </interactant>
    <interactant intactId="EBI-752074">
        <id>P41219</id>
        <label>PRPH</label>
    </interactant>
    <organismsDiffer>false</organismsDiffer>
    <experiments>7</experiments>
</comment>
<comment type="interaction">
    <interactant intactId="EBI-1055572">
        <id>P17661</id>
    </interactant>
    <interactant intactId="EBI-2340927">
        <id>P78317</id>
        <label>RNF4</label>
    </interactant>
    <organismsDiffer>false</organismsDiffer>
    <experiments>3</experiments>
</comment>
<comment type="interaction">
    <interactant intactId="EBI-1055572">
        <id>P17661</id>
    </interactant>
    <interactant intactId="EBI-710310">
        <id>Q15560</id>
        <label>TCEA2</label>
    </interactant>
    <organismsDiffer>false</organismsDiffer>
    <experiments>3</experiments>
</comment>
<comment type="interaction">
    <interactant intactId="EBI-1055572">
        <id>P17661</id>
    </interactant>
    <interactant intactId="EBI-1105213">
        <id>Q9UBB9</id>
        <label>TFIP11</label>
    </interactant>
    <organismsDiffer>false</organismsDiffer>
    <experiments>3</experiments>
</comment>
<comment type="interaction">
    <interactant intactId="EBI-1055572">
        <id>P17661</id>
    </interactant>
    <interactant intactId="EBI-10180829">
        <id>Q7KZS0</id>
        <label>UBE2I</label>
    </interactant>
    <organismsDiffer>false</organismsDiffer>
    <experiments>3</experiments>
</comment>
<comment type="interaction">
    <interactant intactId="EBI-1055572">
        <id>P17661</id>
    </interactant>
    <interactant intactId="EBI-353844">
        <id>P08670</id>
        <label>VIM</label>
    </interactant>
    <organismsDiffer>false</organismsDiffer>
    <experiments>8</experiments>
</comment>
<comment type="interaction">
    <interactant intactId="EBI-1055572">
        <id>P17661</id>
    </interactant>
    <interactant intactId="EBI-515331">
        <id>P07947</id>
        <label>YES1</label>
    </interactant>
    <organismsDiffer>false</organismsDiffer>
    <experiments>3</experiments>
</comment>
<comment type="interaction">
    <interactant intactId="EBI-1055572">
        <id>P17661</id>
    </interactant>
    <interactant intactId="EBI-17634549">
        <id>Q9UJ78-2</id>
        <label>ZMYM5</label>
    </interactant>
    <organismsDiffer>false</organismsDiffer>
    <experiments>3</experiments>
</comment>
<comment type="subcellular location">
    <subcellularLocation>
        <location evidence="36 41 45">Cytoplasm</location>
        <location evidence="36 41 45">Myofibril</location>
        <location evidence="36 41 45">Sarcomere</location>
        <location evidence="36 41 45">Z line</location>
    </subcellularLocation>
    <subcellularLocation>
        <location evidence="40">Cytoplasm</location>
    </subcellularLocation>
    <subcellularLocation>
        <location evidence="40">Cell membrane</location>
        <location evidence="40">Sarcolemma</location>
    </subcellularLocation>
    <subcellularLocation>
        <location evidence="2">Nucleus</location>
    </subcellularLocation>
    <subcellularLocation>
        <location evidence="2">Cell tip</location>
    </subcellularLocation>
    <subcellularLocation>
        <location evidence="2">Nucleus envelope</location>
    </subcellularLocation>
    <text evidence="2 36 41">Localizes in the intercalated disks which occur at the Z line of cardiomyocytes (PubMed:24200904, PubMed:26724190). Localizes in the nucleus exclusively in differentiating cardiac progenitor cells and premature cardiomyocytes (By similarity). PKP2 is required for correct anchoring of DES at the cell tip and nuclear envelope (By similarity).</text>
</comment>
<comment type="PTM">
    <text evidence="3">ADP-ribosylation prevents ability to form intermediate filaments.</text>
</comment>
<comment type="PTM">
    <text evidence="2">Phosphorylation at Ser-7, Ser-28 and Ser-32 by CDK1, phosphorylation at Ser-60 by AURKB and phosphorylation at Thr-76 by ROCK1 contribute to efficient separation of desmin intermediate filaments during mitosis.</text>
</comment>
<comment type="PTM">
    <text evidence="2">Ubiquitination by a SCF-like complex containing ASB2 isoform 1 leads to proteasomal degradation.</text>
</comment>
<comment type="disease" evidence="6 7 9 10 11 12 14 15 16 17 18 19 20 21 22 24 26 27 28 31 32 34 35 39 40 43 44 46 47">
    <disease id="DI-01481">
        <name>Myopathy, myofibrillar, 1</name>
        <acronym>MFM1</acronym>
        <description>A form of myofibrillar myopathy, a group of chronic neuromuscular disorders characterized at ultrastructural level by disintegration of the sarcomeric Z disk and myofibrils, and replacement of the normal myofibrillar markings by small dense granules, or larger hyaline masses, or amorphous material. MFM1 is characterized by skeletal muscle weakness associated with cardiac conduction blocks, arrhythmias, restrictive heart failure, and accumulation of desmin-reactive deposits in cardiac and skeletal muscle cells.</description>
        <dbReference type="MIM" id="601419"/>
    </disease>
    <text evidence="27">The disease is caused by variants affecting the gene represented in this entry. Mutations in the DES gene are associated with a variable clinical phenotype which encompasses isolated myopathies, pure cardiac phenotypes (including dilated cardiomyopathy, restrictive cardiomyopathy and arrhythmogenic right ventricular cardiomyopathy), cardiac conduction disease, and combinations of these disorders. If both cardiologic and neurologic features occur, they can manifest in any order, as cardiologic features can precede, occur simultaneously with, or follow manifestation of generalized neuromuscular disease (PubMed:19879535).</text>
</comment>
<comment type="disease" evidence="5 36 41 45">
    <disease id="DI-00216">
        <name>Cardiomyopathy, dilated, 1I</name>
        <acronym>CMD1I</acronym>
        <description>A disorder characterized by ventricular dilation and impaired systolic function, resulting in congestive heart failure and arrhythmia. Patients are at risk of premature death.</description>
        <dbReference type="MIM" id="604765"/>
    </disease>
    <text>The disease is caused by variants affecting the gene represented in this entry.</text>
</comment>
<comment type="disease" evidence="25 40">
    <disease id="DI-02049">
        <name>Neurogenic scapuloperoneal syndrome Kaeser type</name>
        <acronym>Kaeser syndrome</acronym>
        <description>Autosomal dominant disorder with a peculiar scapuloperoneal distribution of weakness and atrophy. A large clinical variability is observed ranging from scapuloperoneal, limb grindle and distal phenotypes with variable cardiac or respiratory involvement. Facial weakness, dysphagia and gynaecomastia are frequent additional symptoms. Affected men seemingly bear a higher risk of sudden, cardiac death as compared to affected women. Histological and immunohistochemical examination of muscle biopsy specimens reveal a wide spectrum of findings ranging from near normal or unspecific pathology to typical, myofibrillar changes with accumulation of desmin.</description>
        <dbReference type="MIM" id="181400"/>
    </disease>
    <text>The disease is caused by variants affecting the gene represented in this entry.</text>
</comment>
<comment type="similarity">
    <text evidence="4">Belongs to the intermediate filament family.</text>
</comment>
<comment type="online information" name="Wikipedia">
    <link uri="https://en.wikipedia.org/wiki/Desmin"/>
    <text>Desmin entry</text>
</comment>
<dbReference type="EMBL" id="M63391">
    <property type="protein sequence ID" value="AAA99221.1"/>
    <property type="molecule type" value="Genomic_DNA"/>
</dbReference>
<dbReference type="EMBL" id="U59167">
    <property type="protein sequence ID" value="AAC50680.1"/>
    <property type="molecule type" value="mRNA"/>
</dbReference>
<dbReference type="EMBL" id="AF055081">
    <property type="protein sequence ID" value="AAC39938.1"/>
    <property type="molecule type" value="mRNA"/>
</dbReference>
<dbReference type="EMBL" id="AF055082">
    <property type="protein sequence ID" value="AAC39939.1"/>
    <property type="molecule type" value="mRNA"/>
</dbReference>
<dbReference type="EMBL" id="AF055083">
    <property type="protein sequence ID" value="AAC39940.1"/>
    <property type="molecule type" value="mRNA"/>
</dbReference>
<dbReference type="EMBL" id="AF137053">
    <property type="protein sequence ID" value="AAF15400.1"/>
    <property type="molecule type" value="mRNA"/>
</dbReference>
<dbReference type="EMBL" id="AF486807">
    <property type="protein sequence ID" value="AAL93205.1"/>
    <property type="molecule type" value="mRNA"/>
</dbReference>
<dbReference type="EMBL" id="AF487828">
    <property type="protein sequence ID" value="AAL99078.1"/>
    <property type="molecule type" value="mRNA"/>
</dbReference>
<dbReference type="EMBL" id="AF521879">
    <property type="protein sequence ID" value="AAN15036.1"/>
    <property type="molecule type" value="mRNA"/>
</dbReference>
<dbReference type="EMBL" id="AF527578">
    <property type="protein sequence ID" value="AAN37810.1"/>
    <property type="molecule type" value="mRNA"/>
</dbReference>
<dbReference type="EMBL" id="AY083345">
    <property type="protein sequence ID" value="AAL99215.1"/>
    <property type="molecule type" value="mRNA"/>
</dbReference>
<dbReference type="EMBL" id="AY114212">
    <property type="protein sequence ID" value="AAM47026.1"/>
    <property type="molecule type" value="Genomic_DNA"/>
</dbReference>
<dbReference type="EMBL" id="AY125465">
    <property type="protein sequence ID" value="AAM95238.1"/>
    <property type="molecule type" value="mRNA"/>
</dbReference>
<dbReference type="EMBL" id="BC032116">
    <property type="protein sequence ID" value="AAH32116.1"/>
    <property type="molecule type" value="mRNA"/>
</dbReference>
<dbReference type="EMBL" id="AJ132926">
    <property type="protein sequence ID" value="CAB62389.1"/>
    <property type="molecule type" value="mRNA"/>
</dbReference>
<dbReference type="CCDS" id="CCDS33383.1"/>
<dbReference type="PIR" id="JE0063">
    <property type="entry name" value="DMHU"/>
</dbReference>
<dbReference type="RefSeq" id="NP_001918.3">
    <property type="nucleotide sequence ID" value="NM_001927.3"/>
</dbReference>
<dbReference type="SMR" id="P17661"/>
<dbReference type="BioGRID" id="108038">
    <property type="interactions" value="155"/>
</dbReference>
<dbReference type="FunCoup" id="P17661">
    <property type="interactions" value="278"/>
</dbReference>
<dbReference type="IntAct" id="P17661">
    <property type="interactions" value="99"/>
</dbReference>
<dbReference type="MINT" id="P17661"/>
<dbReference type="STRING" id="9606.ENSP00000363071"/>
<dbReference type="GlyCosmos" id="P17661">
    <property type="glycosylation" value="1 site, 1 glycan"/>
</dbReference>
<dbReference type="GlyGen" id="P17661">
    <property type="glycosylation" value="2 sites, 8 N-linked glycans (1 site), 1 O-linked glycan (1 site)"/>
</dbReference>
<dbReference type="iPTMnet" id="P17661"/>
<dbReference type="PhosphoSitePlus" id="P17661"/>
<dbReference type="SwissPalm" id="P17661"/>
<dbReference type="BioMuta" id="DES"/>
<dbReference type="DMDM" id="6686280"/>
<dbReference type="REPRODUCTION-2DPAGE" id="IPI00465084"/>
<dbReference type="REPRODUCTION-2DPAGE" id="P17661"/>
<dbReference type="jPOST" id="P17661"/>
<dbReference type="MassIVE" id="P17661"/>
<dbReference type="PaxDb" id="9606-ENSP00000363071"/>
<dbReference type="PeptideAtlas" id="P17661"/>
<dbReference type="ProteomicsDB" id="53502"/>
<dbReference type="Pumba" id="P17661"/>
<dbReference type="ABCD" id="P17661">
    <property type="antibodies" value="1 sequenced antibody"/>
</dbReference>
<dbReference type="Antibodypedia" id="3503">
    <property type="antibodies" value="1562 antibodies from 53 providers"/>
</dbReference>
<dbReference type="DNASU" id="1674"/>
<dbReference type="Ensembl" id="ENST00000373960.4">
    <property type="protein sequence ID" value="ENSP00000363071.3"/>
    <property type="gene ID" value="ENSG00000175084.13"/>
</dbReference>
<dbReference type="GeneID" id="1674"/>
<dbReference type="KEGG" id="hsa:1674"/>
<dbReference type="MANE-Select" id="ENST00000373960.4">
    <property type="protein sequence ID" value="ENSP00000363071.3"/>
    <property type="RefSeq nucleotide sequence ID" value="NM_001927.4"/>
    <property type="RefSeq protein sequence ID" value="NP_001918.3"/>
</dbReference>
<dbReference type="AGR" id="HGNC:2770"/>
<dbReference type="CTD" id="1674"/>
<dbReference type="DisGeNET" id="1674"/>
<dbReference type="GeneCards" id="DES"/>
<dbReference type="GeneReviews" id="DES"/>
<dbReference type="HGNC" id="HGNC:2770">
    <property type="gene designation" value="DES"/>
</dbReference>
<dbReference type="HPA" id="ENSG00000175084">
    <property type="expression patterns" value="Tissue enhanced (heart muscle, intestine, skeletal muscle)"/>
</dbReference>
<dbReference type="MalaCards" id="DES"/>
<dbReference type="MIM" id="125660">
    <property type="type" value="gene"/>
</dbReference>
<dbReference type="MIM" id="181400">
    <property type="type" value="phenotype"/>
</dbReference>
<dbReference type="MIM" id="601419">
    <property type="type" value="phenotype"/>
</dbReference>
<dbReference type="MIM" id="604765">
    <property type="type" value="phenotype"/>
</dbReference>
<dbReference type="neXtProt" id="NX_P17661"/>
<dbReference type="OpenTargets" id="ENSG00000175084"/>
<dbReference type="Orphanet" id="98909">
    <property type="disease" value="Desminopathy"/>
</dbReference>
<dbReference type="Orphanet" id="154">
    <property type="disease" value="Familial isolated dilated cardiomyopathy"/>
</dbReference>
<dbReference type="Orphanet" id="85146">
    <property type="disease" value="Neurogenic scapuloperoneal syndrome, Kaeser type"/>
</dbReference>
<dbReference type="PharmGKB" id="PA27253"/>
<dbReference type="VEuPathDB" id="HostDB:ENSG00000175084"/>
<dbReference type="eggNOG" id="KOG0977">
    <property type="taxonomic scope" value="Eukaryota"/>
</dbReference>
<dbReference type="GeneTree" id="ENSGT00940000155522"/>
<dbReference type="HOGENOM" id="CLU_012560_7_4_1"/>
<dbReference type="InParanoid" id="P17661"/>
<dbReference type="OMA" id="DMEERHG"/>
<dbReference type="OrthoDB" id="2441647at2759"/>
<dbReference type="PAN-GO" id="P17661">
    <property type="GO annotations" value="8 GO annotations based on evolutionary models"/>
</dbReference>
<dbReference type="PhylomeDB" id="P17661"/>
<dbReference type="TreeFam" id="TF330122"/>
<dbReference type="PathwayCommons" id="P17661"/>
<dbReference type="Reactome" id="R-HSA-390522">
    <property type="pathway name" value="Striated Muscle Contraction"/>
</dbReference>
<dbReference type="SignaLink" id="P17661"/>
<dbReference type="SIGNOR" id="P17661"/>
<dbReference type="BioGRID-ORCS" id="1674">
    <property type="hits" value="7 hits in 1156 CRISPR screens"/>
</dbReference>
<dbReference type="CD-CODE" id="91857CE7">
    <property type="entry name" value="Nucleolus"/>
</dbReference>
<dbReference type="CD-CODE" id="FB4E32DD">
    <property type="entry name" value="Presynaptic clusters and postsynaptic densities"/>
</dbReference>
<dbReference type="ChiTaRS" id="DES">
    <property type="organism name" value="human"/>
</dbReference>
<dbReference type="GeneWiki" id="Desmin"/>
<dbReference type="GenomeRNAi" id="1674"/>
<dbReference type="Pharos" id="P17661">
    <property type="development level" value="Tbio"/>
</dbReference>
<dbReference type="PRO" id="PR:P17661"/>
<dbReference type="Proteomes" id="UP000005640">
    <property type="component" value="Chromosome 2"/>
</dbReference>
<dbReference type="RNAct" id="P17661">
    <property type="molecule type" value="protein"/>
</dbReference>
<dbReference type="Bgee" id="ENSG00000175084">
    <property type="expression patterns" value="Expressed in saphenous vein and 196 other cell types or tissues"/>
</dbReference>
<dbReference type="ExpressionAtlas" id="P17661">
    <property type="expression patterns" value="baseline and differential"/>
</dbReference>
<dbReference type="GO" id="GO:0097512">
    <property type="term" value="C:cardiac myofibril"/>
    <property type="evidence" value="ECO:0000314"/>
    <property type="project" value="CAFA"/>
</dbReference>
<dbReference type="GO" id="GO:0051286">
    <property type="term" value="C:cell tip"/>
    <property type="evidence" value="ECO:0000250"/>
    <property type="project" value="UniProtKB"/>
</dbReference>
<dbReference type="GO" id="GO:0005911">
    <property type="term" value="C:cell-cell junction"/>
    <property type="evidence" value="ECO:0000318"/>
    <property type="project" value="GO_Central"/>
</dbReference>
<dbReference type="GO" id="GO:0005829">
    <property type="term" value="C:cytosol"/>
    <property type="evidence" value="ECO:0000304"/>
    <property type="project" value="Reactome"/>
</dbReference>
<dbReference type="GO" id="GO:0070062">
    <property type="term" value="C:extracellular exosome"/>
    <property type="evidence" value="ECO:0007005"/>
    <property type="project" value="UniProtKB"/>
</dbReference>
<dbReference type="GO" id="GO:0005916">
    <property type="term" value="C:fascia adherens"/>
    <property type="evidence" value="ECO:0007669"/>
    <property type="project" value="Ensembl"/>
</dbReference>
<dbReference type="GO" id="GO:0014704">
    <property type="term" value="C:intercalated disc"/>
    <property type="evidence" value="ECO:0000314"/>
    <property type="project" value="UniProtKB"/>
</dbReference>
<dbReference type="GO" id="GO:0005882">
    <property type="term" value="C:intermediate filament"/>
    <property type="evidence" value="ECO:0000318"/>
    <property type="project" value="GO_Central"/>
</dbReference>
<dbReference type="GO" id="GO:0045111">
    <property type="term" value="C:intermediate filament cytoskeleton"/>
    <property type="evidence" value="ECO:0000314"/>
    <property type="project" value="HPA"/>
</dbReference>
<dbReference type="GO" id="GO:0031594">
    <property type="term" value="C:neuromuscular junction"/>
    <property type="evidence" value="ECO:0007669"/>
    <property type="project" value="Ensembl"/>
</dbReference>
<dbReference type="GO" id="GO:0005635">
    <property type="term" value="C:nuclear envelope"/>
    <property type="evidence" value="ECO:0000250"/>
    <property type="project" value="UniProtKB"/>
</dbReference>
<dbReference type="GO" id="GO:0005634">
    <property type="term" value="C:nucleus"/>
    <property type="evidence" value="ECO:0000250"/>
    <property type="project" value="UniProtKB"/>
</dbReference>
<dbReference type="GO" id="GO:0042383">
    <property type="term" value="C:sarcolemma"/>
    <property type="evidence" value="ECO:0000314"/>
    <property type="project" value="UniProtKB"/>
</dbReference>
<dbReference type="GO" id="GO:0030018">
    <property type="term" value="C:Z disc"/>
    <property type="evidence" value="ECO:0000314"/>
    <property type="project" value="UniProtKB"/>
</dbReference>
<dbReference type="GO" id="GO:0008092">
    <property type="term" value="F:cytoskeletal protein binding"/>
    <property type="evidence" value="ECO:0000353"/>
    <property type="project" value="BHF-UCL"/>
</dbReference>
<dbReference type="GO" id="GO:0042802">
    <property type="term" value="F:identical protein binding"/>
    <property type="evidence" value="ECO:0000353"/>
    <property type="project" value="IntAct"/>
</dbReference>
<dbReference type="GO" id="GO:0005200">
    <property type="term" value="F:structural constituent of cytoskeleton"/>
    <property type="evidence" value="ECO:0000318"/>
    <property type="project" value="GO_Central"/>
</dbReference>
<dbReference type="GO" id="GO:0007010">
    <property type="term" value="P:cytoskeleton organization"/>
    <property type="evidence" value="ECO:0000304"/>
    <property type="project" value="ProtInc"/>
</dbReference>
<dbReference type="GO" id="GO:0045109">
    <property type="term" value="P:intermediate filament organization"/>
    <property type="evidence" value="ECO:0000315"/>
    <property type="project" value="UniProtKB"/>
</dbReference>
<dbReference type="GO" id="GO:0006936">
    <property type="term" value="P:muscle contraction"/>
    <property type="evidence" value="ECO:0000304"/>
    <property type="project" value="ProtInc"/>
</dbReference>
<dbReference type="GO" id="GO:0006998">
    <property type="term" value="P:nuclear envelope organization"/>
    <property type="evidence" value="ECO:0000250"/>
    <property type="project" value="UniProtKB"/>
</dbReference>
<dbReference type="GO" id="GO:0008016">
    <property type="term" value="P:regulation of heart contraction"/>
    <property type="evidence" value="ECO:0000304"/>
    <property type="project" value="ProtInc"/>
</dbReference>
<dbReference type="GO" id="GO:0060538">
    <property type="term" value="P:skeletal muscle organ development"/>
    <property type="evidence" value="ECO:0000318"/>
    <property type="project" value="GO_Central"/>
</dbReference>
<dbReference type="FunFam" id="1.20.5.1160:FF:000001">
    <property type="entry name" value="Keratin type II"/>
    <property type="match status" value="1"/>
</dbReference>
<dbReference type="FunFam" id="1.20.5.170:FF:000002">
    <property type="entry name" value="Type I keratin KA11"/>
    <property type="match status" value="1"/>
</dbReference>
<dbReference type="FunFam" id="1.20.5.500:FF:000001">
    <property type="entry name" value="Type II keratin 23"/>
    <property type="match status" value="1"/>
</dbReference>
<dbReference type="Gene3D" id="1.20.5.170">
    <property type="match status" value="1"/>
</dbReference>
<dbReference type="Gene3D" id="1.20.5.500">
    <property type="entry name" value="Single helix bin"/>
    <property type="match status" value="1"/>
</dbReference>
<dbReference type="Gene3D" id="1.20.5.1160">
    <property type="entry name" value="Vasodilator-stimulated phosphoprotein"/>
    <property type="match status" value="1"/>
</dbReference>
<dbReference type="InterPro" id="IPR018039">
    <property type="entry name" value="IF_conserved"/>
</dbReference>
<dbReference type="InterPro" id="IPR039008">
    <property type="entry name" value="IF_rod_dom"/>
</dbReference>
<dbReference type="InterPro" id="IPR006821">
    <property type="entry name" value="Intermed_filament_DNA-bd"/>
</dbReference>
<dbReference type="InterPro" id="IPR050405">
    <property type="entry name" value="Intermediate_filament"/>
</dbReference>
<dbReference type="PANTHER" id="PTHR45652:SF2">
    <property type="entry name" value="DESMIN"/>
    <property type="match status" value="1"/>
</dbReference>
<dbReference type="PANTHER" id="PTHR45652">
    <property type="entry name" value="GLIAL FIBRILLARY ACIDIC PROTEIN"/>
    <property type="match status" value="1"/>
</dbReference>
<dbReference type="Pfam" id="PF00038">
    <property type="entry name" value="Filament"/>
    <property type="match status" value="1"/>
</dbReference>
<dbReference type="Pfam" id="PF04732">
    <property type="entry name" value="Filament_head"/>
    <property type="match status" value="1"/>
</dbReference>
<dbReference type="SMART" id="SM01391">
    <property type="entry name" value="Filament"/>
    <property type="match status" value="1"/>
</dbReference>
<dbReference type="SUPFAM" id="SSF64593">
    <property type="entry name" value="Intermediate filament protein, coiled coil region"/>
    <property type="match status" value="2"/>
</dbReference>
<dbReference type="PROSITE" id="PS00226">
    <property type="entry name" value="IF_ROD_1"/>
    <property type="match status" value="1"/>
</dbReference>
<dbReference type="PROSITE" id="PS51842">
    <property type="entry name" value="IF_ROD_2"/>
    <property type="match status" value="1"/>
</dbReference>
<evidence type="ECO:0000250" key="1">
    <source>
        <dbReference type="UniProtKB" id="P02542"/>
    </source>
</evidence>
<evidence type="ECO:0000250" key="2">
    <source>
        <dbReference type="UniProtKB" id="P31001"/>
    </source>
</evidence>
<evidence type="ECO:0000250" key="3">
    <source>
        <dbReference type="UniProtKB" id="P48675"/>
    </source>
</evidence>
<evidence type="ECO:0000255" key="4">
    <source>
        <dbReference type="PROSITE-ProRule" id="PRU01188"/>
    </source>
</evidence>
<evidence type="ECO:0000269" key="5">
    <source>
    </source>
</evidence>
<evidence type="ECO:0000269" key="6">
    <source>
    </source>
</evidence>
<evidence type="ECO:0000269" key="7">
    <source>
    </source>
</evidence>
<evidence type="ECO:0000269" key="8">
    <source>
    </source>
</evidence>
<evidence type="ECO:0000269" key="9">
    <source>
    </source>
</evidence>
<evidence type="ECO:0000269" key="10">
    <source>
    </source>
</evidence>
<evidence type="ECO:0000269" key="11">
    <source>
    </source>
</evidence>
<evidence type="ECO:0000269" key="12">
    <source>
    </source>
</evidence>
<evidence type="ECO:0000269" key="13">
    <source>
    </source>
</evidence>
<evidence type="ECO:0000269" key="14">
    <source>
    </source>
</evidence>
<evidence type="ECO:0000269" key="15">
    <source>
    </source>
</evidence>
<evidence type="ECO:0000269" key="16">
    <source>
    </source>
</evidence>
<evidence type="ECO:0000269" key="17">
    <source>
    </source>
</evidence>
<evidence type="ECO:0000269" key="18">
    <source>
    </source>
</evidence>
<evidence type="ECO:0000269" key="19">
    <source>
    </source>
</evidence>
<evidence type="ECO:0000269" key="20">
    <source>
    </source>
</evidence>
<evidence type="ECO:0000269" key="21">
    <source>
    </source>
</evidence>
<evidence type="ECO:0000269" key="22">
    <source>
    </source>
</evidence>
<evidence type="ECO:0000269" key="23">
    <source>
    </source>
</evidence>
<evidence type="ECO:0000269" key="24">
    <source>
    </source>
</evidence>
<evidence type="ECO:0000269" key="25">
    <source>
    </source>
</evidence>
<evidence type="ECO:0000269" key="26">
    <source>
    </source>
</evidence>
<evidence type="ECO:0000269" key="27">
    <source>
    </source>
</evidence>
<evidence type="ECO:0000269" key="28">
    <source>
    </source>
</evidence>
<evidence type="ECO:0000269" key="29">
    <source>
    </source>
</evidence>
<evidence type="ECO:0000269" key="30">
    <source>
    </source>
</evidence>
<evidence type="ECO:0000269" key="31">
    <source>
    </source>
</evidence>
<evidence type="ECO:0000269" key="32">
    <source>
    </source>
</evidence>
<evidence type="ECO:0000269" key="33">
    <source>
    </source>
</evidence>
<evidence type="ECO:0000269" key="34">
    <source>
    </source>
</evidence>
<evidence type="ECO:0000269" key="35">
    <source>
    </source>
</evidence>
<evidence type="ECO:0000269" key="36">
    <source>
    </source>
</evidence>
<evidence type="ECO:0000269" key="37">
    <source>
    </source>
</evidence>
<evidence type="ECO:0000269" key="38">
    <source>
    </source>
</evidence>
<evidence type="ECO:0000269" key="39">
    <source>
    </source>
</evidence>
<evidence type="ECO:0000269" key="40">
    <source>
    </source>
</evidence>
<evidence type="ECO:0000269" key="41">
    <source>
    </source>
</evidence>
<evidence type="ECO:0000269" key="42">
    <source>
    </source>
</evidence>
<evidence type="ECO:0000269" key="43">
    <source>
    </source>
</evidence>
<evidence type="ECO:0000269" key="44">
    <source>
    </source>
</evidence>
<evidence type="ECO:0000269" key="45">
    <source>
    </source>
</evidence>
<evidence type="ECO:0000269" key="46">
    <source>
    </source>
</evidence>
<evidence type="ECO:0000269" key="47">
    <source>
    </source>
</evidence>
<evidence type="ECO:0000269" key="48">
    <source>
    </source>
</evidence>
<evidence type="ECO:0000303" key="49">
    <source>
    </source>
</evidence>
<evidence type="ECO:0000305" key="50"/>
<evidence type="ECO:0007744" key="51">
    <source>
    </source>
</evidence>
<name>DESM_HUMAN</name>
<feature type="initiator methionine" description="Removed" evidence="1">
    <location>
        <position position="1"/>
    </location>
</feature>
<feature type="chain" id="PRO_0000063771" description="Desmin">
    <location>
        <begin position="2"/>
        <end position="470"/>
    </location>
</feature>
<feature type="domain" description="IF rod" evidence="4">
    <location>
        <begin position="108"/>
        <end position="416"/>
    </location>
</feature>
<feature type="region of interest" description="Head">
    <location>
        <begin position="2"/>
        <end position="108"/>
    </location>
</feature>
<feature type="region of interest" description="Coil 1A">
    <location>
        <begin position="109"/>
        <end position="141"/>
    </location>
</feature>
<feature type="region of interest" description="Linker 1">
    <location>
        <begin position="142"/>
        <end position="151"/>
    </location>
</feature>
<feature type="region of interest" description="Coil 1B">
    <location>
        <begin position="152"/>
        <end position="252"/>
    </location>
</feature>
<feature type="region of interest" description="Linker 12">
    <location>
        <begin position="253"/>
        <end position="268"/>
    </location>
</feature>
<feature type="region of interest" description="Interaction with NEB" evidence="34">
    <location>
        <begin position="268"/>
        <end position="415"/>
    </location>
</feature>
<feature type="region of interest" description="Coil 2A">
    <location>
        <begin position="269"/>
        <end position="287"/>
    </location>
</feature>
<feature type="region of interest" description="Linker 2">
    <location>
        <begin position="288"/>
        <end position="295"/>
    </location>
</feature>
<feature type="region of interest" description="Coil 2B">
    <location>
        <begin position="296"/>
        <end position="412"/>
    </location>
</feature>
<feature type="region of interest" description="Tail">
    <location>
        <begin position="413"/>
        <end position="470"/>
    </location>
</feature>
<feature type="region of interest" description="Interaction with CRYAB" evidence="44">
    <location>
        <begin position="438"/>
        <end position="453"/>
    </location>
</feature>
<feature type="modified residue" description="Phosphoserine; by CDK1" evidence="2">
    <location>
        <position position="7"/>
    </location>
</feature>
<feature type="modified residue" description="Phosphoserine; by AURKB" evidence="13">
    <location>
        <position position="12"/>
    </location>
</feature>
<feature type="modified residue" description="Omega-N-methylarginine" evidence="2">
    <location>
        <position position="16"/>
    </location>
</feature>
<feature type="modified residue" description="Phosphothreonine; by AURKB and ROCK1" evidence="13 48">
    <location>
        <position position="17"/>
    </location>
</feature>
<feature type="modified residue" description="Phosphoserine; by CDK1" evidence="37 51">
    <location>
        <position position="28"/>
    </location>
</feature>
<feature type="modified residue" description="Phosphoserine" evidence="2">
    <location>
        <position position="31"/>
    </location>
</feature>
<feature type="modified residue" description="Phosphoserine; by CDK1" evidence="37 42">
    <location>
        <position position="32"/>
    </location>
</feature>
<feature type="modified residue" description="Asymmetric dimethylarginine; alternate" evidence="2">
    <location>
        <position position="37"/>
    </location>
</feature>
<feature type="modified residue" description="Omega-N-methylarginine; alternate" evidence="2">
    <location>
        <position position="37"/>
    </location>
</feature>
<feature type="modified residue" description="Phosphoserine" evidence="3">
    <location>
        <position position="45"/>
    </location>
</feature>
<feature type="modified residue" description="ADP-ribosylarginine" evidence="3">
    <location>
        <position position="58"/>
    </location>
</feature>
<feature type="modified residue" description="Phosphoserine; by AURKB" evidence="13">
    <location>
        <position position="60"/>
    </location>
</feature>
<feature type="modified residue" description="Phosphoserine" evidence="2">
    <location>
        <position position="68"/>
    </location>
</feature>
<feature type="modified residue" description="Omega-N-methylarginine" evidence="2">
    <location>
        <position position="70"/>
    </location>
</feature>
<feature type="modified residue" description="Phosphothreonine; by ROCK1" evidence="48">
    <location>
        <position position="76"/>
    </location>
</feature>
<feature type="modified residue" description="Phosphothreonine; by ROCK1" evidence="48">
    <location>
        <position position="77"/>
    </location>
</feature>
<feature type="modified residue" description="Phosphoserine" evidence="3">
    <location>
        <position position="81"/>
    </location>
</feature>
<feature type="modified residue" description="Phosphoserine" evidence="3">
    <location>
        <position position="290"/>
    </location>
</feature>
<feature type="modified residue" description="Phosphoserine" evidence="3">
    <location>
        <position position="358"/>
    </location>
</feature>
<feature type="modified residue" description="Phosphoserine" evidence="3">
    <location>
        <position position="361"/>
    </location>
</feature>
<feature type="modified residue" description="Phosphoserine" evidence="2">
    <location>
        <position position="424"/>
    </location>
</feature>
<feature type="sequence variant" id="VAR_042448" description="In MFM1; dbSNP:rs58999456." evidence="16 39">
    <original>S</original>
    <variation>I</variation>
    <location>
        <position position="2"/>
    </location>
</feature>
<feature type="sequence variant" id="VAR_067207" description="In MFM1; dbSNP:rs903985237." evidence="31">
    <original>S</original>
    <variation>F</variation>
    <location>
        <position position="7"/>
    </location>
</feature>
<feature type="sequence variant" id="VAR_067208" description="In MFM1; some patients manifest a severe cardiac phenotype with right ventricular predominance; dbSNP:rs62636495." evidence="26 27">
    <original>S</original>
    <variation>F</variation>
    <location>
        <position position="13"/>
    </location>
</feature>
<feature type="sequence variant" id="VAR_079048" description="In MFM1; dbSNP:rs60798368." evidence="21">
    <original>R</original>
    <variation>C</variation>
    <location>
        <position position="16"/>
    </location>
</feature>
<feature type="sequence variant" id="VAR_042449" description="In MFM1; exhibits significantly delayed filament assembly kinetics when bound to NEB; enhanced binding affinity towards NEB; dbSNP:rs60794845." evidence="16 34">
    <original>S</original>
    <variation>F</variation>
    <location>
        <position position="46"/>
    </location>
</feature>
<feature type="sequence variant" id="VAR_042450" description="In MFM1; dbSNP:rs60794845." evidence="16">
    <original>S</original>
    <variation>Y</variation>
    <location>
        <position position="46"/>
    </location>
</feature>
<feature type="sequence variant" id="VAR_069191" description="In MFM1; the clinical picture is dominated by arrhythmogenic right ventricular cardiomyopathy and terminal heart failure; results in impaired filaments formation; dbSNP:rs267607499." evidence="28">
    <original>N</original>
    <variation>S</variation>
    <location>
        <position position="116"/>
    </location>
</feature>
<feature type="sequence variant" id="VAR_075228" description="In CMD1I; results in impaired filaments formation, does not localize at intercalated disks; dbSNP:rs1954373010." evidence="36">
    <original>A</original>
    <variation>D</variation>
    <location>
        <position position="120"/>
    </location>
</feature>
<feature type="sequence variant" id="VAR_075229" description="In CMD1I; results in impaired filaments formation, does not localize at intercalated disks; dbSNP:rs397516695." evidence="41">
    <original>L</original>
    <variation>P</variation>
    <location>
        <position position="136"/>
    </location>
</feature>
<feature type="sequence variant" id="VAR_009188" description="In MFM1; severe form." evidence="47">
    <location>
        <begin position="173"/>
        <end position="179"/>
    </location>
</feature>
<feature type="sequence variant" id="VAR_042451" description="May play a role in cardiomyopathies and distal myopathies if combined with other DES mutations or mutations in other genes; does not affect the formation of a normal complete filamentous network; dbSNP:rs41272699." evidence="15 22 30 33">
    <original>A</original>
    <variation>V</variation>
    <location>
        <position position="213"/>
    </location>
</feature>
<feature type="sequence variant" id="VAR_070101" description="In MFM1; the mutant cannot form de novo desmin intermediate filaments causing disruption of the endogenous intermediate filament network and formation of pathologic aggregates; dbSNP:rs2125167652." evidence="12">
    <location>
        <position position="240"/>
    </location>
</feature>
<feature type="sequence variant" id="VAR_069192" description="Found in a patient with severe arrhythmogenic right ventricular cardiomyopathy; uncertain significance; the patient also carries a frameshift mutation in PKP2; dbSNP:rs201945924." evidence="33">
    <original>K</original>
    <variation>E</variation>
    <location>
        <position position="241"/>
    </location>
</feature>
<feature type="sequence variant" id="VAR_042452" description="In MFM1; exhibits significantly delayed filament assembly kinetics when bound to NEB and NEBL; enhanced binding affinity towards NEB and NEBL; dbSNP:rs267607486." evidence="34 39">
    <original>E</original>
    <variation>D</variation>
    <location>
        <position position="245"/>
    </location>
</feature>
<feature type="sequence variant" id="VAR_075230" description="In CMD1I; uncertain significance; does not affect filaments formation; dbSNP:rs2125168243." evidence="36">
    <original>H</original>
    <variation>R</variation>
    <location>
        <position position="326"/>
    </location>
</feature>
<feature type="sequence variant" id="VAR_007900" description="In MFM1; mild adult-onset; unable to form a functional filamentous network; dbSNP:rs59962885." evidence="7 46">
    <original>A</original>
    <variation>P</variation>
    <location>
        <position position="337"/>
    </location>
</feature>
<feature type="sequence variant" id="VAR_067209" description="In MFM1; results in the formation of a filamentous network disrupted by multiple breaks and clumps or large aggregates; dbSNP:rs57496341." evidence="22">
    <original>L</original>
    <variation>R</variation>
    <location>
        <position position="338"/>
    </location>
</feature>
<feature type="sequence variant" id="VAR_042453" description="In MFM1; unable to form a filamentous network; abolishes binding to MTM1; dbSNP:rs267607482." evidence="7 15 29">
    <original>N</original>
    <variation>D</variation>
    <location>
        <position position="342"/>
    </location>
</feature>
<feature type="sequence variant" id="VAR_009189" description="In MFM1; distal onset; incapable of forming filamentous networks; dbSNP:rs57639980." evidence="6">
    <original>L</original>
    <variation>P</variation>
    <location>
        <position position="345"/>
    </location>
</feature>
<feature type="sequence variant" id="VAR_042454" description="In Kaeser syndrome and MFM1; incapable of de novo formation of a desmin intermediate filaments network; exerts a dominant negative effect on the ordered lateral arrangement of desmin subunits; may produce structural changes; forms subsarcolemmal aggregates; dbSNP:rs57965306." evidence="19 25 39 40">
    <original>R</original>
    <variation>P</variation>
    <location>
        <position position="350"/>
    </location>
</feature>
<feature type="sequence variant" id="VAR_042455" description="In MFM1; dbSNP:rs61368398." evidence="20">
    <original>R</original>
    <variation>P</variation>
    <location>
        <position position="355"/>
    </location>
</feature>
<feature type="sequence variant" id="VAR_042456" description="In MFM1; unable to polymerize and form an intracellular filamentous network; abolishes binding to MTM1; dbSNP:rs58898021." evidence="14 15 29">
    <original>A</original>
    <variation>P</variation>
    <location>
        <position position="357"/>
    </location>
</feature>
<feature type="sequence variant" id="VAR_018769" description="In MFM1." evidence="15">
    <location>
        <begin position="359"/>
        <end position="361"/>
    </location>
</feature>
<feature type="sequence variant" id="VAR_007901" description="In MFM1; heterozygous with I-393 gives a severe childhood-onset; unable to form a functional filamentous network in the presence of I-393; abolishes binding to MTM1; dbSNP:rs121913000." evidence="7 22 29 46">
    <original>A</original>
    <variation>P</variation>
    <location>
        <position position="360"/>
    </location>
</feature>
<feature type="sequence variant" id="VAR_018770" description="In MFM1." evidence="15">
    <location>
        <position position="366"/>
    </location>
</feature>
<feature type="sequence variant" id="VAR_042457" description="In MFM1; unable to polymerize and form an intracellular filamentous network; does not affect binding to MTM1; dbSNP:rs59308628." evidence="14 15 29">
    <original>L</original>
    <variation>P</variation>
    <location>
        <position position="370"/>
    </location>
</feature>
<feature type="sequence variant" id="VAR_018771" description="In MFM1; dbSNP:rs57955682." evidence="10">
    <original>L</original>
    <variation>P</variation>
    <location>
        <position position="385"/>
    </location>
</feature>
<feature type="sequence variant" id="VAR_018772" description="In MFM1; dbSNP:rs121913004." evidence="11">
    <original>Q</original>
    <variation>P</variation>
    <location>
        <position position="389"/>
    </location>
</feature>
<feature type="sequence variant" id="VAR_007902" description="In MFM1; heterozygous with P-360 gives a severe childhood-onset; filamentous network is not affected however several spots indicate focal disorganization; dbSNP:rs121913001." evidence="7 22 46">
    <original>N</original>
    <variation>I</variation>
    <location>
        <position position="393"/>
    </location>
</feature>
<feature type="sequence variant" id="VAR_086534" description="In CMD1I; uncertain significance; impaired subcellular localization; dbSNP:rs796115330." evidence="45">
    <original>L</original>
    <variation>P</variation>
    <location>
        <position position="398"/>
    </location>
</feature>
<feature type="sequence variant" id="VAR_067210" description="In MFM1; results in the formation of a filamentous network disrupted by multiple breaks and clumps or large aggregates; dbSNP:rs61130669." evidence="22">
    <original>D</original>
    <variation>Y</variation>
    <location>
        <position position="399"/>
    </location>
</feature>
<feature type="sequence variant" id="VAR_067211" description="In MFM1; results in the formation of a filamentous network disrupted by multiple breaks and clumps or large aggregates; dbSNP:rs57694264." evidence="22">
    <original>E</original>
    <variation>K</variation>
    <location>
        <position position="401"/>
    </location>
</feature>
<feature type="sequence variant" id="VAR_042458" description="In MFM1; unable to form a filamentous network; dbSNP:rs121913003." evidence="7 9 21">
    <original>R</original>
    <variation>W</variation>
    <location>
        <position position="406"/>
    </location>
</feature>
<feature type="sequence variant" id="VAR_069074" description="In MFM1; found in a family with myofibrillar myopathy and arrhythmogenic right ventricular cardiomyopathy; dbSNP:rs62635763." evidence="32">
    <original>P</original>
    <variation>S</variation>
    <location>
        <position position="419"/>
    </location>
</feature>
<feature type="sequence variant" id="VAR_042459" description="In MFM1; reveals a severe disturbance of filament-formation competence and filament-filament interactions; dbSNP:rs121913005." evidence="24">
    <original>T</original>
    <variation>I</variation>
    <location>
        <position position="442"/>
    </location>
</feature>
<feature type="sequence variant" id="VAR_042460" description="In MFM1.">
    <original>K</original>
    <variation>M</variation>
    <location>
        <position position="449"/>
    </location>
</feature>
<feature type="sequence variant" id="VAR_042461" description="In MFM1; dbSNP:rs267607485." evidence="16">
    <original>K</original>
    <variation>T</variation>
    <location>
        <position position="449"/>
    </location>
</feature>
<feature type="sequence variant" id="VAR_018773" description="In CMD1I and MFM1; reveals a severe disturbance of filament-formation competence and filament-filament interactions; reduced interaction with CRYAB; dbSNP:rs121913002." evidence="5 7 24 44">
    <original>I</original>
    <variation>M</variation>
    <location>
        <position position="451"/>
    </location>
</feature>
<feature type="sequence variant" id="VAR_079049" description="In MFM1; exhibits significantly delayed filament assembly kinetics when bound to NEB and NEBL; enhanced binding affinity towards NEB and NEBL; dbSNP:rs267607488." evidence="21 34">
    <original>T</original>
    <variation>I</variation>
    <location>
        <position position="453"/>
    </location>
</feature>
<feature type="sequence variant" id="VAR_042462" description="In MFM1; reveals a severe disturbance of filament-formation competence and filament-filament interactions; increased interaction with CRYAB; dbSNP:rs267607490." evidence="24 31 44">
    <original>R</original>
    <variation>W</variation>
    <location>
        <position position="454"/>
    </location>
</feature>
<feature type="sequence variant" id="VAR_042463" description="In MFM1; reveals a severe disturbance of filament-formation competence and filament-filament interactions; dbSNP:rs267607491." evidence="24">
    <original>S</original>
    <variation>I</variation>
    <location>
        <position position="460"/>
    </location>
</feature>
<feature type="mutagenesis site" description="Results in impaired filaments formation." evidence="36">
    <original>A</original>
    <variation>E</variation>
    <variation>R</variation>
    <location>
        <position position="120"/>
    </location>
</feature>
<feature type="mutagenesis site" description="Does not result in impaired filaments formation." evidence="36">
    <original>A</original>
    <variation>K</variation>
    <variation>L</variation>
    <variation>V</variation>
    <location>
        <position position="120"/>
    </location>
</feature>
<feature type="sequence conflict" description="In Ref. 1 and 2; AAA99221." evidence="50" ref="1 2">
    <original>GFP</original>
    <variation>VFS</variation>
    <location>
        <begin position="23"/>
        <end position="25"/>
    </location>
</feature>
<feature type="sequence conflict" description="In Ref. 1 and 2; AAA99221." evidence="50" ref="1 2">
    <original>G</original>
    <variation>P</variation>
    <location>
        <position position="39"/>
    </location>
</feature>
<feature type="sequence conflict" description="In Ref. 1 and 2; AAA99221." evidence="50" ref="1 2">
    <original>FANYI</original>
    <variation>SPIYM</variation>
    <location>
        <begin position="119"/>
        <end position="123"/>
    </location>
</feature>
<feature type="sequence conflict" description="In Ref. 1, 2; AAA99221 and 3; AAC50680." evidence="50" ref="1 2 3">
    <location>
        <position position="134"/>
    </location>
</feature>
<organism>
    <name type="scientific">Homo sapiens</name>
    <name type="common">Human</name>
    <dbReference type="NCBI Taxonomy" id="9606"/>
    <lineage>
        <taxon>Eukaryota</taxon>
        <taxon>Metazoa</taxon>
        <taxon>Chordata</taxon>
        <taxon>Craniata</taxon>
        <taxon>Vertebrata</taxon>
        <taxon>Euteleostomi</taxon>
        <taxon>Mammalia</taxon>
        <taxon>Eutheria</taxon>
        <taxon>Euarchontoglires</taxon>
        <taxon>Primates</taxon>
        <taxon>Haplorrhini</taxon>
        <taxon>Catarrhini</taxon>
        <taxon>Hominidae</taxon>
        <taxon>Homo</taxon>
    </lineage>
</organism>
<reference key="1">
    <citation type="journal article" date="1989" name="Gene">
        <title>Human desmin-coding gene: complete nucleotide sequence, characterization and regulation of expression during myogenesis and development.</title>
        <authorList>
            <person name="Li Z."/>
            <person name="Lilienbaum A."/>
            <person name="Butler-Browne G."/>
            <person name="Paulin D."/>
        </authorList>
    </citation>
    <scope>NUCLEOTIDE SEQUENCE [GENOMIC DNA]</scope>
</reference>
<reference key="2">
    <citation type="journal article" date="1991" name="J. Biol. Chem.">
        <title>High level desmin expression depends on a muscle-specific enhancer.</title>
        <authorList>
            <person name="Li Z."/>
            <person name="Paulin D."/>
        </authorList>
    </citation>
    <scope>NUCLEOTIDE SEQUENCE [GENOMIC DNA]</scope>
</reference>
<reference key="3">
    <citation type="journal article" date="1996" name="Hum. Genet.">
        <title>Human desmin gene: cDNA sequence, regional localization and exclusion of the locus in a familial desmin-related myopathy.</title>
        <authorList>
            <person name="Vicart P."/>
            <person name="Dupret J.-M."/>
            <person name="Hazan J."/>
            <person name="Li Z."/>
            <person name="Gyapay G."/>
            <person name="Krishnamoorthy R."/>
            <person name="Weissenbach J."/>
            <person name="Fardeau M."/>
            <person name="Paulin D."/>
        </authorList>
    </citation>
    <scope>NUCLEOTIDE SEQUENCE [MRNA]</scope>
    <source>
        <tissue>Muscle</tissue>
    </source>
</reference>
<reference key="4">
    <citation type="journal article" date="1998" name="Nat. Genet.">
        <title>Missense mutations in desmin associated with familial cardiac and skeletal myopathy.</title>
        <authorList>
            <person name="Goldfarb L.G."/>
            <person name="Park K.-Y."/>
            <person name="Cervenakova L."/>
            <person name="Gorokhova S."/>
            <person name="Lee H.-S."/>
            <person name="Vasconcelos O."/>
            <person name="Nagle J.W."/>
            <person name="Semino-Mora C."/>
            <person name="Sivakumar K."/>
            <person name="Dalakas M.C."/>
        </authorList>
    </citation>
    <scope>NUCLEOTIDE SEQUENCE [MRNA]</scope>
    <scope>VARIANTS MFM1 PRO-337; PRO-360 AND ILE-393</scope>
</reference>
<reference key="5">
    <citation type="journal article" date="1999" name="Circulation">
        <title>Desmin mutation responsible for idiopathic dilated cardiomyopathy.</title>
        <authorList>
            <person name="Li D."/>
            <person name="Tapscoft T."/>
            <person name="Gonzalez O."/>
            <person name="Burch P.E."/>
            <person name="Quinones M.A."/>
            <person name="Zoghbi W.A."/>
            <person name="Hill R."/>
            <person name="Bachinski L.L."/>
            <person name="Mann D.L."/>
            <person name="Roberts R."/>
        </authorList>
    </citation>
    <scope>NUCLEOTIDE SEQUENCE [MRNA]</scope>
    <scope>VARIANT CMD1I MET-451</scope>
    <scope>INVOLVEMENT IN CMD1I</scope>
</reference>
<reference key="6">
    <citation type="journal article" date="2001" name="Hum. Mutat.">
        <title>Structural and functional analysis of a new desmin variant causing desmin-related myopathy.</title>
        <authorList>
            <person name="Goudeau B."/>
            <person name="Dagvadorj A."/>
            <person name="Rodrigues-Lima F."/>
            <person name="Nedellec P."/>
            <person name="Casteras-Simon M."/>
            <person name="Perret E."/>
            <person name="Langlois S."/>
            <person name="Goldfarb L."/>
            <person name="Vicart P."/>
        </authorList>
    </citation>
    <scope>NUCLEOTIDE SEQUENCE [MRNA]</scope>
    <scope>VARIANT MFM1 PRO-389</scope>
</reference>
<reference key="7">
    <citation type="journal article" date="2004" name="Hum. Genet.">
        <title>Small deletions disturb desmin architecture leading to breakdown of muscle cells and development of skeletal or cardioskeletal myopathy.</title>
        <authorList>
            <person name="Kaminska A."/>
            <person name="Strelkov S.V."/>
            <person name="Goudeau B."/>
            <person name="Olive M."/>
            <person name="Dagvadorj A."/>
            <person name="Fidzianska A."/>
            <person name="Simon-Casteras M."/>
            <person name="Shatunov A."/>
            <person name="Dalakas M.C."/>
            <person name="Ferrer I."/>
            <person name="Kwiecinski H."/>
            <person name="Vicart P."/>
            <person name="Goldfarb L.G."/>
        </authorList>
    </citation>
    <scope>NUCLEOTIDE SEQUENCE [GENOMIC DNA]</scope>
    <scope>VARIANTS MFM1 ASP-342; PRO-357; 359-GLU--SER-361 DEL; ASN-366 DEL AND PRO-370</scope>
    <scope>VARIANT VAL-213</scope>
</reference>
<reference key="8">
    <citation type="journal article" date="2004" name="Genome Res.">
        <title>The status, quality, and expansion of the NIH full-length cDNA project: the Mammalian Gene Collection (MGC).</title>
        <authorList>
            <consortium name="The MGC Project Team"/>
        </authorList>
    </citation>
    <scope>NUCLEOTIDE SEQUENCE [LARGE SCALE MRNA]</scope>
    <source>
        <tissue>Muscle</tissue>
    </source>
</reference>
<reference key="9">
    <citation type="journal article" date="1999" name="Hum. Mol. Genet.">
        <title>A missense mutation in the desmin rod domain is associated with autosomal dominant distal myopathy, and exerts a dominant negative effect on filament formation.</title>
        <authorList>
            <person name="Sjoeberg G."/>
            <person name="Saavedra-Matiz C.A."/>
            <person name="Rosen D.R."/>
            <person name="Wijsman E.M."/>
            <person name="Borg K."/>
            <person name="Horowitz S.H."/>
            <person name="Sejersen T."/>
        </authorList>
    </citation>
    <scope>NUCLEOTIDE SEQUENCE [MRNA] OF 337-353</scope>
    <scope>VARIANT MFM1 PRO-345</scope>
    <scope>CHARACTERIZATION OF VARIANT MFM1 PRO-345</scope>
    <source>
        <tissue>Skeletal muscle</tissue>
    </source>
</reference>
<reference key="10">
    <citation type="journal article" date="1998" name="Biochem. Biophys. Res. Commun.">
        <title>Rho-associated kinase phosphorylates desmin, the myogenic intermediate filament protein, at unique amino-terminal sites.</title>
        <authorList>
            <person name="Inada H."/>
            <person name="Goto H."/>
            <person name="Tanabe K."/>
            <person name="Nishi Y."/>
            <person name="Kaibuchi K."/>
            <person name="Inagaki M."/>
        </authorList>
    </citation>
    <scope>PHOSPHORYLATION AT THR-17; THR-76 AND THR-77</scope>
</reference>
<reference key="11">
    <citation type="journal article" date="2000" name="J. Cell Sci.">
        <title>Interaction of plakophilins with desmoplakin and intermediate filament proteins: an in vitro analysis.</title>
        <authorList>
            <person name="Hofmann I."/>
            <person name="Mertens C."/>
            <person name="Brettel M."/>
            <person name="Nimmrich V."/>
            <person name="Schnoelzer M."/>
            <person name="Herrmann H."/>
        </authorList>
    </citation>
    <scope>INTERACTION WITH PKP1</scope>
</reference>
<reference key="12">
    <citation type="journal article" date="2003" name="Mol. Biol. Cell">
        <title>Functional significance of the specific sites phosphorylated in desmin at cleavage furrow: Aurora-B may phosphorylate and regulate type III intermediate filaments during cytokinesis coordinatedly with Rho-kinase.</title>
        <authorList>
            <person name="Kawajiri A."/>
            <person name="Yasui Y."/>
            <person name="Goto H."/>
            <person name="Tatsuka M."/>
            <person name="Takahashi M."/>
            <person name="Nagata K."/>
            <person name="Inagaki M."/>
        </authorList>
    </citation>
    <scope>PHOSPHORYLATION AT SER-12; THR-17 AND SER-60</scope>
</reference>
<reference key="13">
    <citation type="journal article" date="2006" name="J. Dermatol.">
        <title>Interactions between epiplakin and intermediate filaments.</title>
        <authorList>
            <person name="Wang W."/>
            <person name="Sumiyoshi H."/>
            <person name="Yoshioka H."/>
            <person name="Fujiwara S."/>
        </authorList>
    </citation>
    <scope>INTERACTION WITH EPPK1</scope>
</reference>
<reference key="14">
    <citation type="journal article" date="2009" name="Anal. Chem.">
        <title>Lys-N and trypsin cover complementary parts of the phosphoproteome in a refined SCX-based approach.</title>
        <authorList>
            <person name="Gauci S."/>
            <person name="Helbig A.O."/>
            <person name="Slijper M."/>
            <person name="Krijgsveld J."/>
            <person name="Heck A.J."/>
            <person name="Mohammed S."/>
        </authorList>
    </citation>
    <scope>IDENTIFICATION BY MASS SPECTROMETRY [LARGE SCALE ANALYSIS]</scope>
</reference>
<reference key="15">
    <citation type="journal article" date="2011" name="J. Clin. Invest.">
        <title>Myotubularin controls desmin intermediate filament architecture and mitochondrial dynamics in human and mouse skeletal muscle.</title>
        <authorList>
            <person name="Hnia K."/>
            <person name="Tronchere H."/>
            <person name="Tomczak K.K."/>
            <person name="Amoasii L."/>
            <person name="Schultz P."/>
            <person name="Beggs A.H."/>
            <person name="Payrastre B."/>
            <person name="Mandel J.L."/>
            <person name="Laporte J."/>
        </authorList>
    </citation>
    <scope>INTERACTION WITH MTM1</scope>
    <scope>CHARACTERIZATION OF VARIANTS ASP-342; PRO-357; PRO-360 AND PRO-370</scope>
    <scope>SUBUNIT</scope>
</reference>
<reference key="16">
    <citation type="journal article" date="2004" name="Brain">
        <title>Desmin myopathy.</title>
        <authorList>
            <person name="Goldfarb L.G."/>
            <person name="Vicart P."/>
            <person name="Goebel H.H."/>
            <person name="Dalakas M.C."/>
        </authorList>
    </citation>
    <scope>REVIEW ON VARIANTS MFM1</scope>
</reference>
<reference key="17">
    <citation type="journal article" date="2004" name="J. Pathol.">
        <title>Desminopathies in muscle disease.</title>
        <authorList>
            <person name="Paulin D."/>
            <person name="Huet A."/>
            <person name="Khanamyrian L."/>
            <person name="Xue Z."/>
        </authorList>
    </citation>
    <scope>REVIEW ON VARIANTS MFM1</scope>
</reference>
<reference key="18">
    <citation type="journal article" date="2013" name="J. Med. Genet.">
        <title>A novel desmin mutation leading to autosomal recessive limb-girdle muscular dystrophy: distinct histopathological outcomes compared with desminopathies.</title>
        <authorList>
            <person name="Cetin N."/>
            <person name="Balci-Hayta B."/>
            <person name="Gundesli H."/>
            <person name="Korkusuz P."/>
            <person name="Purali N."/>
            <person name="Talim B."/>
            <person name="Tan E."/>
            <person name="Selcen D."/>
            <person name="Erdem-Ozdamar S."/>
            <person name="Dincer P."/>
        </authorList>
    </citation>
    <scope>INVOLVEMENT IN MFM1</scope>
</reference>
<reference key="19">
    <citation type="journal article" date="2014" name="Cardiovasc. Res.">
        <title>Desmin modifications associate with amyloid-like oligomers deposition in heart failure.</title>
        <authorList>
            <person name="Agnetti G."/>
            <person name="Halperin V.L."/>
            <person name="Kirk J.A."/>
            <person name="Chakir K."/>
            <person name="Guo Y."/>
            <person name="Lund L."/>
            <person name="Nicolini F."/>
            <person name="Gherli T."/>
            <person name="Guarnieri C."/>
            <person name="Caldarera C.M."/>
            <person name="Tomaselli G.F."/>
            <person name="Kass D.A."/>
            <person name="Van Eyk J.E."/>
        </authorList>
    </citation>
    <scope>PHOSPHORYLATION AT SER-28 AND SER-32</scope>
    <scope>IDENTIFICATION BY MASS SPECTROMETRY</scope>
</reference>
<reference key="20">
    <citation type="journal article" date="2014" name="J. Invest. Dermatol.">
        <title>Interaction of plectin with keratins 5 and 14: dependence on several plectin domains and keratin quaternary structure.</title>
        <authorList>
            <person name="Bouameur J.E."/>
            <person name="Favre B."/>
            <person name="Fontao L."/>
            <person name="Lingasamy P."/>
            <person name="Begre N."/>
            <person name="Borradori L."/>
        </authorList>
    </citation>
    <scope>INTERACTION WITH PLEC</scope>
</reference>
<reference key="21">
    <citation type="journal article" date="2014" name="J. Proteomics">
        <title>An enzyme assisted RP-RPLC approach for in-depth analysis of human liver phosphoproteome.</title>
        <authorList>
            <person name="Bian Y."/>
            <person name="Song C."/>
            <person name="Cheng K."/>
            <person name="Dong M."/>
            <person name="Wang F."/>
            <person name="Huang J."/>
            <person name="Sun D."/>
            <person name="Wang L."/>
            <person name="Ye M."/>
            <person name="Zou H."/>
        </authorList>
    </citation>
    <scope>PHOSPHORYLATION [LARGE SCALE ANALYSIS] AT SER-28</scope>
    <scope>IDENTIFICATION BY MASS SPECTROMETRY [LARGE SCALE ANALYSIS]</scope>
    <source>
        <tissue>Liver</tissue>
    </source>
</reference>
<reference key="22">
    <citation type="journal article" date="2015" name="Cell Tissue Res.">
        <title>Desmin in muscle and associated diseases: beyond the structural function.</title>
        <authorList>
            <person name="Hnia K."/>
            <person name="Ramspacher C."/>
            <person name="Vermot J."/>
            <person name="Laporte J."/>
        </authorList>
    </citation>
    <scope>REVIEW</scope>
</reference>
<reference key="23">
    <citation type="journal article" date="2016" name="Biochem. Biophys. Res. Commun.">
        <title>Desmin phosphorylation by Cdk1 is required for efficient separation of desmin intermediate filaments in mitosis and detected in murine embryonic/newborn muscle and human rhabdomyosarcoma tissues.</title>
        <authorList>
            <person name="Makihara H."/>
            <person name="Inaba H."/>
            <person name="Enomoto A."/>
            <person name="Tanaka H."/>
            <person name="Tomono Y."/>
            <person name="Ushida K."/>
            <person name="Goto M."/>
            <person name="Kurita K."/>
            <person name="Nishida Y."/>
            <person name="Kasahara K."/>
            <person name="Goto H."/>
            <person name="Inagaki M."/>
        </authorList>
    </citation>
    <scope>PHOSPHORYLATION AT SER-32</scope>
</reference>
<reference key="24">
    <citation type="journal article" date="1998" name="Proc. Natl. Acad. Sci. U.S.A.">
        <title>A dysfunctional desmin mutation in a patient with severe generalized myopathy.</title>
        <authorList>
            <person name="Munoz-Marmol A.M."/>
            <person name="Strasser G."/>
            <person name="Isamat M."/>
            <person name="Coulombe P.A."/>
            <person name="Yang Y."/>
            <person name="Roca X."/>
            <person name="Vela E."/>
            <person name="Mate J.L."/>
            <person name="Coll J."/>
            <person name="Fernandez-Figueras M.T."/>
            <person name="Navas-Palacios J.J."/>
            <person name="Ariza A."/>
            <person name="Fuchs E."/>
        </authorList>
    </citation>
    <scope>VARIANT MFM1 173-ARG--GLU-179 DEL</scope>
</reference>
<reference key="25">
    <citation type="journal article" date="2000" name="Clin. Genet.">
        <title>Sporadic cardiac and skeletal myopathy caused by a de novo desmin mutation.</title>
        <authorList>
            <person name="Park K.-Y."/>
            <person name="Dalakas M.C."/>
            <person name="Semino-Mora C."/>
            <person name="Lee H.-S."/>
            <person name="Litvak S."/>
            <person name="Takeda K."/>
            <person name="Ferrans V.J."/>
            <person name="Goldfarb L.G."/>
        </authorList>
    </citation>
    <scope>VARIANT MFM1 TRP-406</scope>
</reference>
<reference key="26">
    <citation type="journal article" date="2000" name="Neurology">
        <title>A novel de novo mutation in the desmin gene causes desmin myopathy with toxic aggregates.</title>
        <authorList>
            <person name="Sugawara M."/>
            <person name="Kato K."/>
            <person name="Komatsu M."/>
            <person name="Wada C."/>
            <person name="Kawamura K."/>
            <person name="Shindo P.S."/>
            <person name="Yoshioka P.N."/>
            <person name="Tanaka K."/>
            <person name="Watanabe S."/>
            <person name="Toyoshima I."/>
        </authorList>
    </citation>
    <scope>VARIANT MFM1 PRO-385</scope>
</reference>
<reference key="27">
    <citation type="journal article" date="2000" name="N. Engl. J. Med.">
        <title>Desmin myopathy, a skeletal myopathy with cardiomyopathy caused by mutations in the desmin gene.</title>
        <authorList>
            <person name="Dalakas M.C."/>
            <person name="Park K.-Y."/>
            <person name="Semino-Mora C."/>
            <person name="Lee H.S."/>
            <person name="Sivakumar K."/>
            <person name="Goldfarb L.G."/>
        </authorList>
    </citation>
    <scope>VARIANTS MFM1 PRO-337; ASP-342; PRO-360; ILE-393; TRP-406 AND MET-451</scope>
    <scope>CHARACTERIZATION OF VARIANTS MFM1 PRO-337; ASP-342; PRO-360; ILE-393; TRP-406 AND MET-451</scope>
</reference>
<reference key="28">
    <citation type="journal article" date="2003" name="Hum. Mol. Genet.">
        <title>On noxious desmin: functional effects of a novel heterozygous desmin insertion mutation on the extrasarcomeric desmin cytoskeleton and mitochondria.</title>
        <authorList>
            <person name="Schroeder R."/>
            <person name="Goudeau B."/>
            <person name="Simon M.C."/>
            <person name="Fischer D."/>
            <person name="Eggermann T."/>
            <person name="Clemen C.S."/>
            <person name="Li Z."/>
            <person name="Reimann J."/>
            <person name="Xue Z."/>
            <person name="Rudnik-Schoeneborn S."/>
            <person name="Zerres K."/>
            <person name="van der Ven P.F."/>
            <person name="Fuerst D.O."/>
            <person name="Kunz W.S."/>
            <person name="Vicart P."/>
        </authorList>
    </citation>
    <scope>VARIANT MFM1 LYS-240 DEL</scope>
    <scope>CHARACTERIZATION OF VARIANT MFM1 LYS-240 DEL</scope>
</reference>
<reference key="29">
    <citation type="journal article" date="2003" name="Hum. Mol. Genet.">
        <authorList>
            <person name="Schroeder R."/>
            <person name="Goudeau B."/>
            <person name="Simon M.C."/>
            <person name="Fischer D."/>
            <person name="Eggermann T."/>
            <person name="Clemen C.S."/>
            <person name="Li Z."/>
            <person name="Reimann J."/>
            <person name="Xue Z."/>
            <person name="Rudnik-Schoeneborn S."/>
            <person name="Zerres K."/>
            <person name="van der Ven P.F."/>
            <person name="Fuerst D.O."/>
            <person name="Kunz W.S."/>
            <person name="Vicart P."/>
        </authorList>
    </citation>
    <scope>ERRATUM OF PUBMED:12620971</scope>
</reference>
<reference key="30">
    <citation type="journal article" date="2003" name="Muscle Nerve">
        <title>Respiratory insufficiency in desminopathy patients caused by introduction of proline residues in desmin C-terminal alpha-helical segment.</title>
        <authorList>
            <person name="Dagvadorj A."/>
            <person name="Goudeau B."/>
            <person name="Hilton-Jones D."/>
            <person name="Blancato J.K."/>
            <person name="Shatunov A."/>
            <person name="Simon-Casteras M."/>
            <person name="Squier W."/>
            <person name="Nagle J.W."/>
            <person name="Goldfarb L.G."/>
            <person name="Vicart P."/>
        </authorList>
    </citation>
    <scope>VARIANTS MFM1 PRO-357 AND PRO-370</scope>
    <scope>CHARACTERIZATION OF VARIANTS MFM1 PRO-357 AND PRO-370</scope>
</reference>
<reference key="31">
    <citation type="journal article" date="2004" name="Brain">
        <title>Myofibrillar myopathy: clinical, morphological and genetic studies in 63 patients.</title>
        <authorList>
            <person name="Selcen D."/>
            <person name="Ohno K."/>
            <person name="Engel A.G."/>
        </authorList>
    </citation>
    <scope>VARIANTS MFM1 ILE-2; TYR-46; PHE-46 AND THR-449</scope>
</reference>
<reference key="32">
    <citation type="journal article" date="2005" name="Hum. Mol. Genet.">
        <title>Pathogenic effects of a novel heterozygous R350P desmin mutation on the assembly of desmin intermediate filaments in vivo and in vitro.</title>
        <authorList>
            <person name="Baer H."/>
            <person name="Fischer D."/>
            <person name="Goudeau B."/>
            <person name="Kley R.A."/>
            <person name="Clemen C.S."/>
            <person name="Vicart P."/>
            <person name="Herrmann H."/>
            <person name="Vorgerd M."/>
            <person name="Schroeder R."/>
        </authorList>
    </citation>
    <scope>VARIANT MFM1 PRO-350</scope>
    <scope>CHARACTERIZATION OF VARIANT MFM1 PRO-350</scope>
</reference>
<reference key="33">
    <citation type="journal article" date="2005" name="Neuromuscul. Disord.">
        <title>A novel desmin R355P mutation causes cardiac and skeletal myopathy.</title>
        <authorList>
            <person name="Fidzianska A."/>
            <person name="Kotowicz J."/>
            <person name="Sadowska M."/>
            <person name="Goudeau B."/>
            <person name="Walczak E."/>
            <person name="Vicart P."/>
            <person name="Hausmanowa-Petrusewicz I."/>
        </authorList>
    </citation>
    <scope>VARIANT MFM1 PRO-355</scope>
</reference>
<reference key="34">
    <citation type="journal article" date="2006" name="Eur. J. Heart Fail.">
        <title>Desmin accumulation restrictive cardiomyopathy and atrioventricular block associated with desmin gene defects.</title>
        <authorList>
            <person name="Arbustini E."/>
            <person name="Pasotti M."/>
            <person name="Pilotto A."/>
            <person name="Pellegrini C."/>
            <person name="Grasso M."/>
            <person name="Previtali S."/>
            <person name="Repetto A."/>
            <person name="Bellini O."/>
            <person name="Azan G."/>
            <person name="Scaffino M."/>
            <person name="Campana C."/>
            <person name="Piccolo G."/>
            <person name="Vigano M."/>
            <person name="Tavazzi L."/>
        </authorList>
    </citation>
    <scope>VARIANTS MFM1 CYS-16; TRP-406 AND ILE-453</scope>
</reference>
<reference key="35">
    <citation type="journal article" date="2006" name="Hum. Mutat.">
        <title>Variable pathogenic potentials of mutations located in the desmin alpha-helical domain.</title>
        <authorList>
            <person name="Goudeau B."/>
            <person name="Rodrigues-Lima F."/>
            <person name="Fischer D."/>
            <person name="Casteras-Simon M."/>
            <person name="Sambuughin N."/>
            <person name="de Visser M."/>
            <person name="Laforet P."/>
            <person name="Ferrer X."/>
            <person name="Chapon F."/>
            <person name="Sjoberg G."/>
            <person name="Kostareva A."/>
            <person name="Sejersen T."/>
            <person name="Dalakas M.C."/>
            <person name="Goldfarb L.G."/>
            <person name="Vicart P."/>
        </authorList>
    </citation>
    <scope>VARIANTS MFM1 ARG-338; TYR-399 AND LYS-401</scope>
    <scope>VARIANT VAL-213</scope>
    <scope>CHARACTERIZATION OF VARIANTS MFM1 ARG-338; PRO-360; ILE-393; TYR-399 AND LYS-401</scope>
    <scope>CHARACTERIZATION OF VARIANT VAL-213</scope>
</reference>
<reference key="36">
    <citation type="journal article" date="2007" name="Brain">
        <title>Scapuloperoneal syndrome type Kaeser and a wide phenotypic spectrum of adult-onset, dominant myopathies are associated with the desmin mutation R350P.</title>
        <authorList>
            <person name="Walter M.C."/>
            <person name="Reilich P."/>
            <person name="Huebner A."/>
            <person name="Fischer D."/>
            <person name="Schroeder R."/>
            <person name="Vorgerd M."/>
            <person name="Kress W."/>
            <person name="Born C."/>
            <person name="Schoser B.G."/>
            <person name="Krause K.H."/>
            <person name="Klutzny U."/>
            <person name="Bulst S."/>
            <person name="Frey J.R."/>
            <person name="Lochmueller H."/>
        </authorList>
    </citation>
    <scope>VARIANT KAESER SYNDROME PRO-350</scope>
</reference>
<reference key="37">
    <citation type="journal article" date="2007" name="Hum. Mutat.">
        <title>Conspicuous involvement of desmin tail mutations in diverse cardiac and skeletal myopathies.</title>
        <authorList>
            <person name="Baer H."/>
            <person name="Goudeau B."/>
            <person name="Waelde S."/>
            <person name="Casteras-Simon M."/>
            <person name="Muecke N."/>
            <person name="Shatunov A."/>
            <person name="Goldberg Y.P."/>
            <person name="Clarke C."/>
            <person name="Holton J.L."/>
            <person name="Eymard B."/>
            <person name="Katus H.A."/>
            <person name="Fardeau M."/>
            <person name="Goldfarb L."/>
            <person name="Vicart P."/>
            <person name="Herrmann H."/>
        </authorList>
    </citation>
    <scope>VARIANTS MFM1 ILE-442; TRP-454 AND ILE-460</scope>
    <scope>CHARACTERIZATION OF VARIANTS MFM1 ILE-442; MET-451; TRP-454 AND ILE-460</scope>
</reference>
<reference key="38">
    <citation type="journal article" date="2008" name="Neuromuscul. Disord.">
        <title>Characterization of a novel S13F desmin mutation associated with desmin myopathy and heart block in a Chinese family.</title>
        <authorList>
            <person name="Pica E.C."/>
            <person name="Kathirvel P."/>
            <person name="Pramono Z.A."/>
            <person name="Lai P.S."/>
            <person name="Yee W.C."/>
        </authorList>
    </citation>
    <scope>VARIANT MFM1 PHE-13</scope>
</reference>
<reference key="39">
    <citation type="journal article" date="2009" name="Heart Rhythm">
        <title>Severe cardiac phenotype with right ventricular predominance in a large cohort of patients with a single missense mutation in the DES gene.</title>
        <authorList>
            <person name="van Tintelen J.P."/>
            <person name="Van Gelder I.C."/>
            <person name="Asimaki A."/>
            <person name="Suurmeijer A.J."/>
            <person name="Wiesfeld A.C."/>
            <person name="Jongbloed J.D."/>
            <person name="van den Wijngaard A."/>
            <person name="Kuks J.B."/>
            <person name="van Spaendonck-Zwarts K.Y."/>
            <person name="Notermans N."/>
            <person name="Boven L."/>
            <person name="van den Heuvel F."/>
            <person name="Veenstra-Knol H.E."/>
            <person name="Saffitz J.E."/>
            <person name="Hofstra R.M."/>
            <person name="van den Berg M.P."/>
        </authorList>
    </citation>
    <scope>VARIANT MFM1 PHE-13</scope>
    <scope>PHENOTYPIC VARIABILITY IN MFM1 PATIENTS</scope>
</reference>
<reference key="40">
    <citation type="journal article" date="2010" name="Hum. Mol. Genet.">
        <title>De novo desmin-mutation N116S is associated with arrhythmogenic right ventricular cardiomyopathy.</title>
        <authorList>
            <person name="Klauke B."/>
            <person name="Kossmann S."/>
            <person name="Gaertner A."/>
            <person name="Brand K."/>
            <person name="Stork I."/>
            <person name="Brodehl A."/>
            <person name="Dieding M."/>
            <person name="Walhorn V."/>
            <person name="Anselmetti D."/>
            <person name="Gerdes D."/>
            <person name="Bohms B."/>
            <person name="Schulz U."/>
            <person name="Zu Knyphausen E."/>
            <person name="Vorgerd M."/>
            <person name="Gummert J."/>
            <person name="Milting H."/>
        </authorList>
    </citation>
    <scope>VARIANT MFM1 SER-116</scope>
    <scope>CHARACTERIZATION OF VARIANT MFM1 SER-116</scope>
</reference>
<reference key="41">
    <citation type="journal article" date="2011" name="Acta Myol.">
        <title>Desmin A213V substitution represents a rare polymorphism but not a mutation and is more prevalent in patients with heart dilation of various origins.</title>
        <authorList>
            <person name="Kostareva A."/>
            <person name="Sjoberg G."/>
            <person name="Gudkova A."/>
            <person name="Smolina N."/>
            <person name="Semernin E."/>
            <person name="Shlyakhto E."/>
            <person name="Sejersen T."/>
        </authorList>
    </citation>
    <scope>VARIANT VAL-213</scope>
</reference>
<reference key="42">
    <citation type="journal article" date="2011" name="Acta Myol.">
        <title>Clinical, morphological and genetic studies in a cohort of 21 patients with myofibrillar myopathy.</title>
        <authorList>
            <person name="Vattemi G."/>
            <person name="Neri M."/>
            <person name="Piffer S."/>
            <person name="Vicart P."/>
            <person name="Gualandi F."/>
            <person name="Marini M."/>
            <person name="Guglielmi V."/>
            <person name="Filosto M."/>
            <person name="Tonin P."/>
            <person name="Ferlini A."/>
            <person name="Tomelleri G."/>
        </authorList>
    </citation>
    <scope>VARIANTS MFM1 PHE-7 AND TRP-454</scope>
</reference>
<reference key="43">
    <citation type="journal article" date="2012" name="Eur. J. Hum. Genet.">
        <title>Autosomal dominant myofibrillar myopathy with arrhythmogenic right ventricular cardiomyopathy 7 is caused by a DES mutation.</title>
        <authorList>
            <person name="Hedberg C."/>
            <person name="Melberg A."/>
            <person name="Kuhl A."/>
            <person name="Jenne D."/>
            <person name="Oldfors A."/>
        </authorList>
    </citation>
    <scope>VARIANT MFM1 SER-419</scope>
</reference>
<reference key="44">
    <citation type="journal article" date="2013" name="Am. J. Cardiol.">
        <title>Desmin mutations and arrhythmogenic right ventricular cardiomyopathy.</title>
        <authorList>
            <person name="Lorenzon A."/>
            <person name="Beffagna G."/>
            <person name="Bauce B."/>
            <person name="De Bortoli M."/>
            <person name="Li Mura I.E."/>
            <person name="Calore M."/>
            <person name="Dazzo E."/>
            <person name="Basso C."/>
            <person name="Nava A."/>
            <person name="Thiene G."/>
            <person name="Rampazzo A."/>
        </authorList>
    </citation>
    <scope>VARIANTS VAL-213 AND GLU-241</scope>
</reference>
<reference key="45">
    <citation type="journal article" date="2013" name="Circ. Cardiovasc. Genet.">
        <title>The novel desmin mutant p.A120D impairs filament formation, prevents intercalated disk localization, and causes sudden cardiac death.</title>
        <authorList>
            <person name="Brodehl A."/>
            <person name="Dieding M."/>
            <person name="Klauke B."/>
            <person name="Dec E."/>
            <person name="Madaan S."/>
            <person name="Huang T."/>
            <person name="Gargus J."/>
            <person name="Fatima A."/>
            <person name="Saric T."/>
            <person name="Cakar H."/>
            <person name="Walhorn V."/>
            <person name="Toensing K."/>
            <person name="Skrzipczyk T."/>
            <person name="Cebulla R."/>
            <person name="Gerdes D."/>
            <person name="Schulz U."/>
            <person name="Gummert J."/>
            <person name="Svendsen J.H."/>
            <person name="Olesen M.S."/>
            <person name="Anselmetti D."/>
            <person name="Christensen A.H."/>
            <person name="Kimonis V."/>
            <person name="Milting H."/>
        </authorList>
    </citation>
    <scope>VARIANTS CMD1I ASP-120 AND ARG-326</scope>
    <scope>CHARACTERIZATION OF VARIANTS CMD1I ASP-120 AND ARG-326</scope>
    <scope>FUNCTION</scope>
    <scope>SUBCELLULAR LOCATION</scope>
    <scope>MUTAGENESIS OF ALA-120</scope>
</reference>
<reference key="46">
    <citation type="journal article" date="2013" name="Mol. Biol. Cell">
        <title>Nebulin binding impedes mutant desmin filament assembly.</title>
        <authorList>
            <person name="Baker L.K."/>
            <person name="Gillis D.C."/>
            <person name="Sharma S."/>
            <person name="Ambrus A."/>
            <person name="Herrmann H."/>
            <person name="Conover G.M."/>
        </authorList>
    </citation>
    <scope>CHARACTERIZATION OF VARIANTS MFM1 PHE-46; ASP-245 AND ILE-453</scope>
    <scope>INTERACTION WITH NEB</scope>
</reference>
<reference key="47">
    <citation type="journal article" date="2014" name="Orphanet J. Rare Dis.">
        <title>Unusual multisystemic involvement and a novel BAG3 mutation revealed by NGS screening in a large cohort of myofibrillar myopathies.</title>
        <authorList>
            <person name="Semmler A.L."/>
            <person name="Sacconi S."/>
            <person name="Bach J.E."/>
            <person name="Liebe C."/>
            <person name="Buermann J."/>
            <person name="Kley R.A."/>
            <person name="Ferbert A."/>
            <person name="Anderheiden R."/>
            <person name="Van den Bergh P."/>
            <person name="Martin J.J."/>
            <person name="De Jonghe P."/>
            <person name="Neuen-Jacob E."/>
            <person name="Mueller O."/>
            <person name="Deschauer M."/>
            <person name="Bergmann M."/>
            <person name="Schroeder J.M."/>
            <person name="Vorgerd M."/>
            <person name="Schulz J.B."/>
            <person name="Weis J."/>
            <person name="Kress W."/>
            <person name="Claeys K.G."/>
        </authorList>
    </citation>
    <scope>VARIANTS MFM1 ILE-2; ASP-245 AND PRO-350</scope>
</reference>
<reference key="48">
    <citation type="journal article" date="2015" name="Acta Neuropathol.">
        <title>The toxic effect of R350P mutant desmin in striated muscle of man and mouse.</title>
        <authorList>
            <person name="Clemen C.S."/>
            <person name="Stoeckigt F."/>
            <person name="Strucksberg K.H."/>
            <person name="Chevessier F."/>
            <person name="Winter L."/>
            <person name="Schuetz J."/>
            <person name="Bauer R."/>
            <person name="Thorweihe J.M."/>
            <person name="Wenzel D."/>
            <person name="Schloetzer-Schrehardt U."/>
            <person name="Rasche V."/>
            <person name="Krsmanovic P."/>
            <person name="Katus H.A."/>
            <person name="Rottbauer W."/>
            <person name="Just S."/>
            <person name="Mueller O.J."/>
            <person name="Friedrich O."/>
            <person name="Meyer R."/>
            <person name="Herrmann H."/>
            <person name="Schrickel J.W."/>
            <person name="Schroeder R."/>
        </authorList>
    </citation>
    <scope>CHARACTERIZATION OF VARIANT KAESER SYNDROME PRO-350</scope>
    <scope>CHARACTERIZATION OF VARIANT MFM1 PRO-350</scope>
    <scope>FUNCTION</scope>
    <scope>SUBCELLULAR LOCATION</scope>
</reference>
<reference key="49">
    <citation type="journal article" date="2016" name="J. Mol. Cell. Cardiol.">
        <title>Functional characterization of the novel DES mutation p.L136P associated with dilated cardiomyopathy reveals a dominant filament assembly defect.</title>
        <authorList>
            <person name="Brodehl A."/>
            <person name="Dieding M."/>
            <person name="Biere N."/>
            <person name="Unger A."/>
            <person name="Klauke B."/>
            <person name="Walhorn V."/>
            <person name="Gummert J."/>
            <person name="Schulz U."/>
            <person name="Linke W.A."/>
            <person name="Gerull B."/>
            <person name="Vorgert M."/>
            <person name="Anselmetti D."/>
            <person name="Milting H."/>
        </authorList>
    </citation>
    <scope>VARIANT CMD1I PRO-136</scope>
    <scope>CHARACTERIZATION OF VARIANT CMD1I PRO-136</scope>
    <scope>FUNCTION</scope>
    <scope>SUBCELLULAR LOCATION</scope>
</reference>
<reference key="50">
    <citation type="journal article" date="2016" name="Mol. Biol. Cell">
        <title>Nebulette is a powerful cytolinker organizing desmin and actin in mouse hearts.</title>
        <authorList>
            <person name="Hernandez D.A."/>
            <person name="Bennett C.M."/>
            <person name="Dunina-Barkovskaya L."/>
            <person name="Wedig T."/>
            <person name="Capetanaki Y."/>
            <person name="Herrmann H."/>
            <person name="Conover G.M."/>
        </authorList>
    </citation>
    <scope>CHARACTERIZATION OF VARIANTS MFM1 ASP-245 AND ILE-453</scope>
    <scope>INTERACTION WITH NEBL</scope>
</reference>
<reference key="51">
    <citation type="journal article" date="2017" name="Cell Stress Chaperones">
        <title>alphaB-crystallin is a sensor for assembly intermediates and for the subunit topology of desmin intermediate filaments.</title>
        <authorList>
            <person name="Sharma S."/>
            <person name="Conover G.M."/>
            <person name="Elliott J.L."/>
            <person name="Der Perng M."/>
            <person name="Herrmann H."/>
            <person name="Quinlan R.A."/>
        </authorList>
    </citation>
    <scope>CHARACTERIZATION OF VARIANTS MFM1 MET-451 AND TRP-454</scope>
    <scope>INTERACTION WITH CRYAB</scope>
</reference>
<reference key="52">
    <citation type="journal article" date="2019" name="Genet. Med.">
        <title>Functional analysis of DES-p.L398P and RBM20-p.R636C.</title>
        <authorList>
            <person name="Brodehl A."/>
            <person name="Ebbinghaus H."/>
            <person name="Gaertner-Rommel A."/>
            <person name="Stanasiuk C."/>
            <person name="Klauke B."/>
            <person name="Milting H."/>
        </authorList>
    </citation>
    <scope>VARIANT CMD1I PRO-398</scope>
    <scope>CHARACTERIZATION OF VARIANT CMD1I PRO-398</scope>
    <scope>SUBCELLULAR LOCATION</scope>
</reference>
<accession>P17661</accession>
<accession>Q15787</accession>
<accession>Q549R7</accession>
<accession>Q549R8</accession>
<accession>Q549R9</accession>
<accession>Q8IZR1</accession>
<accession>Q8IZR6</accession>
<accession>Q8NES2</accession>
<accession>Q8NEU6</accession>
<accession>Q8TAC4</accession>
<accession>Q8TCX2</accession>
<accession>Q8TD99</accession>
<accession>Q9UHN5</accession>
<accession>Q9UJ80</accession>
<keyword id="KW-0013">ADP-ribosylation</keyword>
<keyword id="KW-0122">Cardiomyopathy</keyword>
<keyword id="KW-1003">Cell membrane</keyword>
<keyword id="KW-0175">Coiled coil</keyword>
<keyword id="KW-0963">Cytoplasm</keyword>
<keyword id="KW-0911">Desmin-related myopathy</keyword>
<keyword id="KW-0225">Disease variant</keyword>
<keyword id="KW-0403">Intermediate filament</keyword>
<keyword id="KW-0947">Limb-girdle muscular dystrophy</keyword>
<keyword id="KW-0472">Membrane</keyword>
<keyword id="KW-0488">Methylation</keyword>
<keyword id="KW-0514">Muscle protein</keyword>
<keyword id="KW-1060">Myofibrillar myopathy</keyword>
<keyword id="KW-0539">Nucleus</keyword>
<keyword id="KW-0597">Phosphoprotein</keyword>
<keyword id="KW-1267">Proteomics identification</keyword>
<keyword id="KW-1185">Reference proteome</keyword>
<keyword id="KW-0832">Ubl conjugation</keyword>
<gene>
    <name type="primary">DES</name>
</gene>
<protein>
    <recommendedName>
        <fullName>Desmin</fullName>
    </recommendedName>
</protein>
<proteinExistence type="evidence at protein level"/>
<sequence>MSQAYSSSQRVSSYRRTFGGAPGFPLGSPLSSPVFPRAGFGSKGSSSSVTSRVYQVSRTSGGAGGLGSLRASRLGTTRTPSSYGAGELLDFSLADAVNQEFLTTRTNEKVELQELNDRFANYIEKVRFLEQQNAALAAEVNRLKGREPTRVAELYEEELRELRRQVEVLTNQRARVDVERDNLLDDLQRLKAKLQEEIQLKEEAENNLAAFRADVDAATLARIDLERRIESLNEEIAFLKKVHEEEIRELQAQLQEQQVQVEMDMSKPDLTAALRDIRAQYETIAAKNISEAEEWYKSKVSDLTQAANKNNDALRQAKQEMMEYRHQIQSYTCEIDALKGTNDSLMRQMRELEDRFASEASGYQDNIARLEEEIRHLKDEMARHLREYQDLLNVKMALDVEIATYRKLLEGEESRINLPIQTYSALNFRETSPEQRGSEVHTKKTVMIKTIETRDGEVVSEATQQQHEVL</sequence>